<keyword id="KW-0002">3D-structure</keyword>
<keyword id="KW-0025">Alternative splicing</keyword>
<keyword id="KW-0090">Biological rhythms</keyword>
<keyword id="KW-0156">Chromatin regulator</keyword>
<keyword id="KW-0158">Chromosome</keyword>
<keyword id="KW-0963">Cytoplasm</keyword>
<keyword id="KW-0945">Host-virus interaction</keyword>
<keyword id="KW-0378">Hydrolase</keyword>
<keyword id="KW-0539">Nucleus</keyword>
<keyword id="KW-0597">Phosphoprotein</keyword>
<keyword id="KW-1267">Proteomics identification</keyword>
<keyword id="KW-1185">Reference proteome</keyword>
<keyword id="KW-0678">Repressor</keyword>
<keyword id="KW-0804">Transcription</keyword>
<keyword id="KW-0805">Transcription regulation</keyword>
<keyword id="KW-0832">Ubl conjugation</keyword>
<dbReference type="EC" id="3.5.1.98" evidence="33 44"/>
<dbReference type="EC" id="3.5.1.-" evidence="19 31 42 43 33 34 36 37 45"/>
<dbReference type="EMBL" id="U66914">
    <property type="protein sequence ID" value="AAC52038.1"/>
    <property type="molecule type" value="mRNA"/>
</dbReference>
<dbReference type="EMBL" id="U75697">
    <property type="protein sequence ID" value="AAB88241.1"/>
    <property type="molecule type" value="mRNA"/>
</dbReference>
<dbReference type="EMBL" id="U75696">
    <property type="protein sequence ID" value="AAB88240.1"/>
    <property type="molecule type" value="mRNA"/>
</dbReference>
<dbReference type="EMBL" id="AF005482">
    <property type="protein sequence ID" value="AAB87752.1"/>
    <property type="molecule type" value="mRNA"/>
</dbReference>
<dbReference type="EMBL" id="AF039703">
    <property type="protein sequence ID" value="AAC98927.1"/>
    <property type="molecule type" value="mRNA"/>
</dbReference>
<dbReference type="EMBL" id="AF059650">
    <property type="protein sequence ID" value="AAC26509.1"/>
    <property type="molecule type" value="Genomic_DNA"/>
</dbReference>
<dbReference type="EMBL" id="CH471062">
    <property type="protein sequence ID" value="EAW61915.1"/>
    <property type="molecule type" value="Genomic_DNA"/>
</dbReference>
<dbReference type="EMBL" id="CH471062">
    <property type="protein sequence ID" value="EAW61916.1"/>
    <property type="molecule type" value="Genomic_DNA"/>
</dbReference>
<dbReference type="EMBL" id="BC000614">
    <property type="protein sequence ID" value="AAH00614.1"/>
    <property type="molecule type" value="mRNA"/>
</dbReference>
<dbReference type="EMBL" id="AF053138">
    <property type="protein sequence ID" value="AAC08351.1"/>
    <property type="molecule type" value="Genomic_DNA"/>
</dbReference>
<dbReference type="EMBL" id="AF053137">
    <property type="protein sequence ID" value="AAC08351.1"/>
    <property type="status" value="JOINED"/>
    <property type="molecule type" value="Genomic_DNA"/>
</dbReference>
<dbReference type="EMBL" id="AF053139">
    <property type="protein sequence ID" value="AAC08352.1"/>
    <property type="molecule type" value="Genomic_DNA"/>
</dbReference>
<dbReference type="CCDS" id="CCDS4264.1">
    <molecule id="O15379-1"/>
</dbReference>
<dbReference type="PIR" id="JC5834">
    <property type="entry name" value="JC5834"/>
</dbReference>
<dbReference type="RefSeq" id="NP_003874.2">
    <molecule id="O15379-1"/>
    <property type="nucleotide sequence ID" value="NM_003883.3"/>
</dbReference>
<dbReference type="PDB" id="4A69">
    <property type="method" value="X-ray"/>
    <property type="resolution" value="2.06 A"/>
    <property type="chains" value="A/B=1-376"/>
</dbReference>
<dbReference type="PDBsum" id="4A69"/>
<dbReference type="SMR" id="O15379"/>
<dbReference type="BioGRID" id="114368">
    <property type="interactions" value="309"/>
</dbReference>
<dbReference type="CORUM" id="O15379"/>
<dbReference type="DIP" id="DIP-24253N"/>
<dbReference type="FunCoup" id="O15379">
    <property type="interactions" value="2186"/>
</dbReference>
<dbReference type="IntAct" id="O15379">
    <property type="interactions" value="139"/>
</dbReference>
<dbReference type="MINT" id="O15379"/>
<dbReference type="STRING" id="9606.ENSP00000302967"/>
<dbReference type="BindingDB" id="O15379"/>
<dbReference type="ChEMBL" id="CHEMBL1829"/>
<dbReference type="DrugBank" id="DB12565">
    <property type="generic name" value="Abexinostat"/>
</dbReference>
<dbReference type="DrugBank" id="DB05015">
    <property type="generic name" value="Belinostat"/>
</dbReference>
<dbReference type="DrugBank" id="DB01262">
    <property type="generic name" value="Decitabine"/>
</dbReference>
<dbReference type="DrugBank" id="DB11841">
    <property type="generic name" value="Entinostat"/>
</dbReference>
<dbReference type="DrugBank" id="DB12645">
    <property type="generic name" value="Givinostat"/>
</dbReference>
<dbReference type="DrugBank" id="DB14979">
    <property type="generic name" value="Martinostat"/>
</dbReference>
<dbReference type="DrugBank" id="DB11830">
    <property type="generic name" value="Mocetinostat"/>
</dbReference>
<dbReference type="DrugBank" id="DB06603">
    <property type="generic name" value="Panobinostat"/>
</dbReference>
<dbReference type="DrugBank" id="DB06819">
    <property type="generic name" value="Phenylbutyric acid"/>
</dbReference>
<dbReference type="DrugBank" id="DB05223">
    <property type="generic name" value="Pracinostat"/>
</dbReference>
<dbReference type="DrugBank" id="DB03766">
    <property type="generic name" value="Propanoic acid"/>
</dbReference>
<dbReference type="DrugBank" id="DB12847">
    <property type="generic name" value="Pyroxamide"/>
</dbReference>
<dbReference type="DrugBank" id="DB06176">
    <property type="generic name" value="Romidepsin"/>
</dbReference>
<dbReference type="DrugBank" id="DB00313">
    <property type="generic name" value="Valproic acid"/>
</dbReference>
<dbReference type="DrugBank" id="DB02546">
    <property type="generic name" value="Vorinostat"/>
</dbReference>
<dbReference type="DrugCentral" id="O15379"/>
<dbReference type="GuidetoPHARMACOLOGY" id="2617"/>
<dbReference type="GlyGen" id="O15379">
    <property type="glycosylation" value="2 sites, 1 N-linked glycan (1 site), 1 O-linked glycan (1 site)"/>
</dbReference>
<dbReference type="iPTMnet" id="O15379"/>
<dbReference type="PhosphoSitePlus" id="O15379"/>
<dbReference type="BioMuta" id="HDAC3"/>
<dbReference type="jPOST" id="O15379"/>
<dbReference type="MassIVE" id="O15379"/>
<dbReference type="PaxDb" id="9606-ENSP00000302967"/>
<dbReference type="PeptideAtlas" id="O15379"/>
<dbReference type="ProteomicsDB" id="48618">
    <molecule id="O15379-1"/>
</dbReference>
<dbReference type="ProteomicsDB" id="48619">
    <molecule id="O15379-2"/>
</dbReference>
<dbReference type="Pumba" id="O15379"/>
<dbReference type="Antibodypedia" id="3568">
    <property type="antibodies" value="996 antibodies from 48 providers"/>
</dbReference>
<dbReference type="DNASU" id="8841"/>
<dbReference type="Ensembl" id="ENST00000305264.8">
    <molecule id="O15379-1"/>
    <property type="protein sequence ID" value="ENSP00000302967.3"/>
    <property type="gene ID" value="ENSG00000171720.10"/>
</dbReference>
<dbReference type="GeneID" id="8841"/>
<dbReference type="KEGG" id="hsa:8841"/>
<dbReference type="MANE-Select" id="ENST00000305264.8">
    <property type="protein sequence ID" value="ENSP00000302967.3"/>
    <property type="RefSeq nucleotide sequence ID" value="NM_003883.4"/>
    <property type="RefSeq protein sequence ID" value="NP_003874.2"/>
</dbReference>
<dbReference type="UCSC" id="uc003llf.3">
    <molecule id="O15379-1"/>
    <property type="organism name" value="human"/>
</dbReference>
<dbReference type="AGR" id="HGNC:4854"/>
<dbReference type="CTD" id="8841"/>
<dbReference type="DisGeNET" id="8841"/>
<dbReference type="GeneCards" id="HDAC3"/>
<dbReference type="HGNC" id="HGNC:4854">
    <property type="gene designation" value="HDAC3"/>
</dbReference>
<dbReference type="HPA" id="ENSG00000171720">
    <property type="expression patterns" value="Low tissue specificity"/>
</dbReference>
<dbReference type="MIM" id="605166">
    <property type="type" value="gene"/>
</dbReference>
<dbReference type="neXtProt" id="NX_O15379"/>
<dbReference type="OpenTargets" id="ENSG00000171720"/>
<dbReference type="PharmGKB" id="PA29228"/>
<dbReference type="VEuPathDB" id="HostDB:ENSG00000171720"/>
<dbReference type="eggNOG" id="KOG1342">
    <property type="taxonomic scope" value="Eukaryota"/>
</dbReference>
<dbReference type="GeneTree" id="ENSGT00940000160487"/>
<dbReference type="HOGENOM" id="CLU_007727_7_6_1"/>
<dbReference type="InParanoid" id="O15379"/>
<dbReference type="OMA" id="GWLRAFH"/>
<dbReference type="OrthoDB" id="1918432at2759"/>
<dbReference type="PAN-GO" id="O15379">
    <property type="GO annotations" value="3 GO annotations based on evolutionary models"/>
</dbReference>
<dbReference type="PhylomeDB" id="O15379"/>
<dbReference type="TreeFam" id="TF352182"/>
<dbReference type="BRENDA" id="3.5.1.98">
    <property type="organism ID" value="2681"/>
</dbReference>
<dbReference type="PathwayCommons" id="O15379"/>
<dbReference type="Reactome" id="R-HSA-1368071">
    <property type="pathway name" value="NR1D1 (REV-ERBA) represses gene expression"/>
</dbReference>
<dbReference type="Reactome" id="R-HSA-193670">
    <property type="pathway name" value="p75NTR negatively regulates cell cycle via SC1"/>
</dbReference>
<dbReference type="Reactome" id="R-HSA-1989781">
    <property type="pathway name" value="PPARA activates gene expression"/>
</dbReference>
<dbReference type="Reactome" id="R-HSA-2122947">
    <property type="pathway name" value="NOTCH1 Intracellular Domain Regulates Transcription"/>
</dbReference>
<dbReference type="Reactome" id="R-HSA-2151201">
    <property type="pathway name" value="Transcriptional activation of mitochondrial biogenesis"/>
</dbReference>
<dbReference type="Reactome" id="R-HSA-2644606">
    <property type="pathway name" value="Constitutive Signaling by NOTCH1 PEST Domain Mutants"/>
</dbReference>
<dbReference type="Reactome" id="R-HSA-2894862">
    <property type="pathway name" value="Constitutive Signaling by NOTCH1 HD+PEST Domain Mutants"/>
</dbReference>
<dbReference type="Reactome" id="R-HSA-3214815">
    <property type="pathway name" value="HDACs deacetylate histones"/>
</dbReference>
<dbReference type="Reactome" id="R-HSA-350054">
    <property type="pathway name" value="Notch-HLH transcription pathway"/>
</dbReference>
<dbReference type="Reactome" id="R-HSA-381340">
    <property type="pathway name" value="Transcriptional regulation of white adipocyte differentiation"/>
</dbReference>
<dbReference type="Reactome" id="R-HSA-390471">
    <property type="pathway name" value="Association of TriC/CCT with target proteins during biosynthesis"/>
</dbReference>
<dbReference type="Reactome" id="R-HSA-400206">
    <property type="pathway name" value="Regulation of lipid metabolism by PPARalpha"/>
</dbReference>
<dbReference type="Reactome" id="R-HSA-400253">
    <property type="pathway name" value="Circadian Clock"/>
</dbReference>
<dbReference type="Reactome" id="R-HSA-5617472">
    <property type="pathway name" value="Activation of anterior HOX genes in hindbrain development during early embryogenesis"/>
</dbReference>
<dbReference type="Reactome" id="R-HSA-8940973">
    <property type="pathway name" value="RUNX2 regulates osteoblast differentiation"/>
</dbReference>
<dbReference type="Reactome" id="R-HSA-8943724">
    <property type="pathway name" value="Regulation of PTEN gene transcription"/>
</dbReference>
<dbReference type="Reactome" id="R-HSA-9022537">
    <property type="pathway name" value="Loss of MECP2 binding ability to the NCoR/SMRT complex"/>
</dbReference>
<dbReference type="Reactome" id="R-HSA-9022692">
    <property type="pathway name" value="Regulation of MECP2 expression and activity"/>
</dbReference>
<dbReference type="Reactome" id="R-HSA-9029569">
    <property type="pathway name" value="NR1H3 &amp; NR1H2 regulate gene expression linked to cholesterol transport and efflux"/>
</dbReference>
<dbReference type="Reactome" id="R-HSA-9609690">
    <property type="pathway name" value="HCMV Early Events"/>
</dbReference>
<dbReference type="Reactome" id="R-HSA-9701898">
    <property type="pathway name" value="STAT3 nuclear events downstream of ALK signaling"/>
</dbReference>
<dbReference type="Reactome" id="R-HSA-9707564">
    <property type="pathway name" value="Cytoprotection by HMOX1"/>
</dbReference>
<dbReference type="Reactome" id="R-HSA-9707616">
    <property type="pathway name" value="Heme signaling"/>
</dbReference>
<dbReference type="Reactome" id="R-HSA-9841922">
    <property type="pathway name" value="MLL4 and MLL3 complexes regulate expression of PPARG target genes in adipogenesis and hepatic steatosis"/>
</dbReference>
<dbReference type="SABIO-RK" id="O15379"/>
<dbReference type="SignaLink" id="O15379"/>
<dbReference type="SIGNOR" id="O15379"/>
<dbReference type="BioGRID-ORCS" id="8841">
    <property type="hits" value="747 hits in 1178 CRISPR screens"/>
</dbReference>
<dbReference type="ChiTaRS" id="HDAC3">
    <property type="organism name" value="human"/>
</dbReference>
<dbReference type="EvolutionaryTrace" id="O15379"/>
<dbReference type="GeneWiki" id="HDAC3"/>
<dbReference type="GenomeRNAi" id="8841"/>
<dbReference type="Pharos" id="O15379">
    <property type="development level" value="Tclin"/>
</dbReference>
<dbReference type="PRO" id="PR:O15379"/>
<dbReference type="Proteomes" id="UP000005640">
    <property type="component" value="Chromosome 5"/>
</dbReference>
<dbReference type="RNAct" id="O15379">
    <property type="molecule type" value="protein"/>
</dbReference>
<dbReference type="Bgee" id="ENSG00000171720">
    <property type="expression patterns" value="Expressed in right hemisphere of cerebellum and 199 other cell types or tissues"/>
</dbReference>
<dbReference type="ExpressionAtlas" id="O15379">
    <property type="expression patterns" value="baseline and differential"/>
</dbReference>
<dbReference type="GO" id="GO:0000785">
    <property type="term" value="C:chromatin"/>
    <property type="evidence" value="ECO:0007669"/>
    <property type="project" value="Ensembl"/>
</dbReference>
<dbReference type="GO" id="GO:0005737">
    <property type="term" value="C:cytoplasm"/>
    <property type="evidence" value="ECO:0000314"/>
    <property type="project" value="UniProtKB"/>
</dbReference>
<dbReference type="GO" id="GO:0005829">
    <property type="term" value="C:cytosol"/>
    <property type="evidence" value="ECO:0000314"/>
    <property type="project" value="UniProtKB"/>
</dbReference>
<dbReference type="GO" id="GO:0005794">
    <property type="term" value="C:Golgi apparatus"/>
    <property type="evidence" value="ECO:0000314"/>
    <property type="project" value="HPA"/>
</dbReference>
<dbReference type="GO" id="GO:0000118">
    <property type="term" value="C:histone deacetylase complex"/>
    <property type="evidence" value="ECO:0000314"/>
    <property type="project" value="UniProtKB"/>
</dbReference>
<dbReference type="GO" id="GO:0072686">
    <property type="term" value="C:mitotic spindle"/>
    <property type="evidence" value="ECO:0000314"/>
    <property type="project" value="UniProtKB"/>
</dbReference>
<dbReference type="GO" id="GO:0005654">
    <property type="term" value="C:nucleoplasm"/>
    <property type="evidence" value="ECO:0000314"/>
    <property type="project" value="HPA"/>
</dbReference>
<dbReference type="GO" id="GO:0005634">
    <property type="term" value="C:nucleus"/>
    <property type="evidence" value="ECO:0000314"/>
    <property type="project" value="UniProtKB"/>
</dbReference>
<dbReference type="GO" id="GO:0005886">
    <property type="term" value="C:plasma membrane"/>
    <property type="evidence" value="ECO:0000314"/>
    <property type="project" value="HPA"/>
</dbReference>
<dbReference type="GO" id="GO:0017053">
    <property type="term" value="C:transcription repressor complex"/>
    <property type="evidence" value="ECO:0000314"/>
    <property type="project" value="UniProtKB"/>
</dbReference>
<dbReference type="GO" id="GO:0003682">
    <property type="term" value="F:chromatin binding"/>
    <property type="evidence" value="ECO:0000314"/>
    <property type="project" value="UniProtKB"/>
</dbReference>
<dbReference type="GO" id="GO:0031490">
    <property type="term" value="F:chromatin DNA binding"/>
    <property type="evidence" value="ECO:0007669"/>
    <property type="project" value="Ensembl"/>
</dbReference>
<dbReference type="GO" id="GO:0030332">
    <property type="term" value="F:cyclin binding"/>
    <property type="evidence" value="ECO:0000353"/>
    <property type="project" value="UniProtKB"/>
</dbReference>
<dbReference type="GO" id="GO:0140297">
    <property type="term" value="F:DNA-binding transcription factor binding"/>
    <property type="evidence" value="ECO:0000304"/>
    <property type="project" value="UniProtKB"/>
</dbReference>
<dbReference type="GO" id="GO:0019899">
    <property type="term" value="F:enzyme binding"/>
    <property type="evidence" value="ECO:0000353"/>
    <property type="project" value="UniProtKB"/>
</dbReference>
<dbReference type="GO" id="GO:0051020">
    <property type="term" value="F:GTPase binding"/>
    <property type="evidence" value="ECO:0007669"/>
    <property type="project" value="Ensembl"/>
</dbReference>
<dbReference type="GO" id="GO:0004407">
    <property type="term" value="F:histone deacetylase activity"/>
    <property type="evidence" value="ECO:0000314"/>
    <property type="project" value="UniProtKB"/>
</dbReference>
<dbReference type="GO" id="GO:0141221">
    <property type="term" value="F:histone deacetylase activity, hydrolytic mechanism"/>
    <property type="evidence" value="ECO:0007669"/>
    <property type="project" value="UniProtKB-EC"/>
</dbReference>
<dbReference type="GO" id="GO:0042826">
    <property type="term" value="F:histone deacetylase binding"/>
    <property type="evidence" value="ECO:0000353"/>
    <property type="project" value="UniProtKB"/>
</dbReference>
<dbReference type="GO" id="GO:0160009">
    <property type="term" value="F:histone decrotonylase activity"/>
    <property type="evidence" value="ECO:0000314"/>
    <property type="project" value="UniProtKB"/>
</dbReference>
<dbReference type="GO" id="GO:0051059">
    <property type="term" value="F:NF-kappaB binding"/>
    <property type="evidence" value="ECO:0000353"/>
    <property type="project" value="UniProtKB"/>
</dbReference>
<dbReference type="GO" id="GO:0160010">
    <property type="term" value="F:protein de-2-hydroxyisobutyrylase activity"/>
    <property type="evidence" value="ECO:0000314"/>
    <property type="project" value="UniProtKB"/>
</dbReference>
<dbReference type="GO" id="GO:0160008">
    <property type="term" value="F:protein decrotonylase activity"/>
    <property type="evidence" value="ECO:0000314"/>
    <property type="project" value="UniProtKB"/>
</dbReference>
<dbReference type="GO" id="GO:0033558">
    <property type="term" value="F:protein lysine deacetylase activity"/>
    <property type="evidence" value="ECO:0000314"/>
    <property type="project" value="UniProtKB"/>
</dbReference>
<dbReference type="GO" id="GO:0160216">
    <property type="term" value="F:protein lysine delactylase activity"/>
    <property type="evidence" value="ECO:0000314"/>
    <property type="project" value="UniProtKB"/>
</dbReference>
<dbReference type="GO" id="GO:0003714">
    <property type="term" value="F:transcription corepressor activity"/>
    <property type="evidence" value="ECO:0000314"/>
    <property type="project" value="UniProtKB"/>
</dbReference>
<dbReference type="GO" id="GO:0001222">
    <property type="term" value="F:transcription corepressor binding"/>
    <property type="evidence" value="ECO:0000353"/>
    <property type="project" value="UniProtKB"/>
</dbReference>
<dbReference type="GO" id="GO:1990381">
    <property type="term" value="F:ubiquitin-specific protease binding"/>
    <property type="evidence" value="ECO:0007669"/>
    <property type="project" value="Ensembl"/>
</dbReference>
<dbReference type="GO" id="GO:0071498">
    <property type="term" value="P:cellular response to fluid shear stress"/>
    <property type="evidence" value="ECO:0000314"/>
    <property type="project" value="UniProtKB"/>
</dbReference>
<dbReference type="GO" id="GO:0071260">
    <property type="term" value="P:cellular response to mechanical stimulus"/>
    <property type="evidence" value="ECO:0007669"/>
    <property type="project" value="Ensembl"/>
</dbReference>
<dbReference type="GO" id="GO:0071374">
    <property type="term" value="P:cellular response to parathyroid hormone stimulus"/>
    <property type="evidence" value="ECO:0007669"/>
    <property type="project" value="Ensembl"/>
</dbReference>
<dbReference type="GO" id="GO:0006325">
    <property type="term" value="P:chromatin organization"/>
    <property type="evidence" value="ECO:0000304"/>
    <property type="project" value="UniProtKB"/>
</dbReference>
<dbReference type="GO" id="GO:0032922">
    <property type="term" value="P:circadian regulation of gene expression"/>
    <property type="evidence" value="ECO:0000250"/>
    <property type="project" value="UniProtKB"/>
</dbReference>
<dbReference type="GO" id="GO:1903575">
    <property type="term" value="P:cornified envelope assembly"/>
    <property type="evidence" value="ECO:0007669"/>
    <property type="project" value="Ensembl"/>
</dbReference>
<dbReference type="GO" id="GO:0140861">
    <property type="term" value="P:DNA repair-dependent chromatin remodeling"/>
    <property type="evidence" value="ECO:0000314"/>
    <property type="project" value="UniProt"/>
</dbReference>
<dbReference type="GO" id="GO:0040029">
    <property type="term" value="P:epigenetic regulation of gene expression"/>
    <property type="evidence" value="ECO:0000318"/>
    <property type="project" value="GO_Central"/>
</dbReference>
<dbReference type="GO" id="GO:0000132">
    <property type="term" value="P:establishment of mitotic spindle orientation"/>
    <property type="evidence" value="ECO:0000314"/>
    <property type="project" value="UniProt"/>
</dbReference>
<dbReference type="GO" id="GO:0061436">
    <property type="term" value="P:establishment of skin barrier"/>
    <property type="evidence" value="ECO:0007669"/>
    <property type="project" value="Ensembl"/>
</dbReference>
<dbReference type="GO" id="GO:0001701">
    <property type="term" value="P:in utero embryonic development"/>
    <property type="evidence" value="ECO:0007669"/>
    <property type="project" value="Ensembl"/>
</dbReference>
<dbReference type="GO" id="GO:0043066">
    <property type="term" value="P:negative regulation of apoptotic process"/>
    <property type="evidence" value="ECO:0000304"/>
    <property type="project" value="ProtInc"/>
</dbReference>
<dbReference type="GO" id="GO:2000726">
    <property type="term" value="P:negative regulation of cardiac muscle cell differentiation"/>
    <property type="evidence" value="ECO:0007669"/>
    <property type="project" value="Ensembl"/>
</dbReference>
<dbReference type="GO" id="GO:0045892">
    <property type="term" value="P:negative regulation of DNA-templated transcription"/>
    <property type="evidence" value="ECO:0000315"/>
    <property type="project" value="UniProtKB"/>
</dbReference>
<dbReference type="GO" id="GO:0032692">
    <property type="term" value="P:negative regulation of interleukin-1 production"/>
    <property type="evidence" value="ECO:0007669"/>
    <property type="project" value="Ensembl"/>
</dbReference>
<dbReference type="GO" id="GO:0046329">
    <property type="term" value="P:negative regulation of JNK cascade"/>
    <property type="evidence" value="ECO:0000315"/>
    <property type="project" value="UniProtKB"/>
</dbReference>
<dbReference type="GO" id="GO:0046826">
    <property type="term" value="P:negative regulation of protein export from nucleus"/>
    <property type="evidence" value="ECO:0007669"/>
    <property type="project" value="Ensembl"/>
</dbReference>
<dbReference type="GO" id="GO:0000122">
    <property type="term" value="P:negative regulation of transcription by RNA polymerase II"/>
    <property type="evidence" value="ECO:0000314"/>
    <property type="project" value="UniProtKB"/>
</dbReference>
<dbReference type="GO" id="GO:0032720">
    <property type="term" value="P:negative regulation of tumor necrosis factor production"/>
    <property type="evidence" value="ECO:0007669"/>
    <property type="project" value="Ensembl"/>
</dbReference>
<dbReference type="GO" id="GO:0061351">
    <property type="term" value="P:neural precursor cell proliferation"/>
    <property type="evidence" value="ECO:0007669"/>
    <property type="project" value="Ensembl"/>
</dbReference>
<dbReference type="GO" id="GO:0120162">
    <property type="term" value="P:positive regulation of cold-induced thermogenesis"/>
    <property type="evidence" value="ECO:0000250"/>
    <property type="project" value="YuBioLab"/>
</dbReference>
<dbReference type="GO" id="GO:0160020">
    <property type="term" value="P:positive regulation of ferroptosis"/>
    <property type="evidence" value="ECO:0000315"/>
    <property type="project" value="UniProt"/>
</dbReference>
<dbReference type="GO" id="GO:0043525">
    <property type="term" value="P:positive regulation of neuron apoptotic process"/>
    <property type="evidence" value="ECO:0007669"/>
    <property type="project" value="Ensembl"/>
</dbReference>
<dbReference type="GO" id="GO:0042307">
    <property type="term" value="P:positive regulation of protein import into nucleus"/>
    <property type="evidence" value="ECO:0000314"/>
    <property type="project" value="UniProtKB"/>
</dbReference>
<dbReference type="GO" id="GO:0001934">
    <property type="term" value="P:positive regulation of protein phosphorylation"/>
    <property type="evidence" value="ECO:0000314"/>
    <property type="project" value="UniProtKB"/>
</dbReference>
<dbReference type="GO" id="GO:0031398">
    <property type="term" value="P:positive regulation of protein ubiquitination"/>
    <property type="evidence" value="ECO:0000250"/>
    <property type="project" value="UniProtKB"/>
</dbReference>
<dbReference type="GO" id="GO:0032008">
    <property type="term" value="P:positive regulation of TOR signaling"/>
    <property type="evidence" value="ECO:0000315"/>
    <property type="project" value="UniProtKB"/>
</dbReference>
<dbReference type="GO" id="GO:0045944">
    <property type="term" value="P:positive regulation of transcription by RNA polymerase II"/>
    <property type="evidence" value="ECO:0000314"/>
    <property type="project" value="UniProtKB"/>
</dbReference>
<dbReference type="GO" id="GO:2000676">
    <property type="term" value="P:positive regulation of type B pancreatic cell apoptotic process"/>
    <property type="evidence" value="ECO:0007669"/>
    <property type="project" value="Ensembl"/>
</dbReference>
<dbReference type="GO" id="GO:0006476">
    <property type="term" value="P:protein deacetylation"/>
    <property type="evidence" value="ECO:0000314"/>
    <property type="project" value="UniProtKB"/>
</dbReference>
<dbReference type="GO" id="GO:0060816">
    <property type="term" value="P:random inactivation of X chromosome"/>
    <property type="evidence" value="ECO:0007669"/>
    <property type="project" value="Ensembl"/>
</dbReference>
<dbReference type="GO" id="GO:0042752">
    <property type="term" value="P:regulation of circadian rhythm"/>
    <property type="evidence" value="ECO:0000250"/>
    <property type="project" value="UniProtKB"/>
</dbReference>
<dbReference type="GO" id="GO:0007346">
    <property type="term" value="P:regulation of mitotic cell cycle"/>
    <property type="evidence" value="ECO:0007669"/>
    <property type="project" value="Ensembl"/>
</dbReference>
<dbReference type="GO" id="GO:0040014">
    <property type="term" value="P:regulation of multicellular organism growth"/>
    <property type="evidence" value="ECO:0007669"/>
    <property type="project" value="Ensembl"/>
</dbReference>
<dbReference type="GO" id="GO:0031647">
    <property type="term" value="P:regulation of protein stability"/>
    <property type="evidence" value="ECO:0000314"/>
    <property type="project" value="UniProtKB"/>
</dbReference>
<dbReference type="GO" id="GO:0071548">
    <property type="term" value="P:response to dexamethasone"/>
    <property type="evidence" value="ECO:0007669"/>
    <property type="project" value="Ensembl"/>
</dbReference>
<dbReference type="GO" id="GO:0031667">
    <property type="term" value="P:response to nutrient levels"/>
    <property type="evidence" value="ECO:0007669"/>
    <property type="project" value="Ensembl"/>
</dbReference>
<dbReference type="GO" id="GO:0009410">
    <property type="term" value="P:response to xenobiotic stimulus"/>
    <property type="evidence" value="ECO:0007669"/>
    <property type="project" value="Ensembl"/>
</dbReference>
<dbReference type="GO" id="GO:0051225">
    <property type="term" value="P:spindle assembly"/>
    <property type="evidence" value="ECO:0000315"/>
    <property type="project" value="UniProtKB"/>
</dbReference>
<dbReference type="GO" id="GO:0006366">
    <property type="term" value="P:transcription by RNA polymerase II"/>
    <property type="evidence" value="ECO:0007669"/>
    <property type="project" value="Ensembl"/>
</dbReference>
<dbReference type="CDD" id="cd10005">
    <property type="entry name" value="HDAC3"/>
    <property type="match status" value="1"/>
</dbReference>
<dbReference type="FunFam" id="3.40.800.20:FF:000004">
    <property type="entry name" value="Histone deacetylase"/>
    <property type="match status" value="1"/>
</dbReference>
<dbReference type="Gene3D" id="3.40.800.20">
    <property type="entry name" value="Histone deacetylase domain"/>
    <property type="match status" value="1"/>
</dbReference>
<dbReference type="IDEAL" id="IID00428"/>
<dbReference type="InterPro" id="IPR050284">
    <property type="entry name" value="HDAC_PDAC"/>
</dbReference>
<dbReference type="InterPro" id="IPR000286">
    <property type="entry name" value="His_deacetylse"/>
</dbReference>
<dbReference type="InterPro" id="IPR003084">
    <property type="entry name" value="His_deacetylse_1"/>
</dbReference>
<dbReference type="InterPro" id="IPR023801">
    <property type="entry name" value="His_deacetylse_dom"/>
</dbReference>
<dbReference type="InterPro" id="IPR037138">
    <property type="entry name" value="His_deacetylse_dom_sf"/>
</dbReference>
<dbReference type="InterPro" id="IPR023696">
    <property type="entry name" value="Ureohydrolase_dom_sf"/>
</dbReference>
<dbReference type="PANTHER" id="PTHR10625:SF36">
    <property type="entry name" value="HISTONE DEACETYLASE 3"/>
    <property type="match status" value="1"/>
</dbReference>
<dbReference type="PANTHER" id="PTHR10625">
    <property type="entry name" value="HISTONE DEACETYLASE HDAC1-RELATED"/>
    <property type="match status" value="1"/>
</dbReference>
<dbReference type="Pfam" id="PF00850">
    <property type="entry name" value="Hist_deacetyl"/>
    <property type="match status" value="1"/>
</dbReference>
<dbReference type="PIRSF" id="PIRSF037913">
    <property type="entry name" value="His_deacetylse_1"/>
    <property type="match status" value="1"/>
</dbReference>
<dbReference type="PRINTS" id="PR01270">
    <property type="entry name" value="HDASUPER"/>
</dbReference>
<dbReference type="PRINTS" id="PR01271">
    <property type="entry name" value="HISDACETLASE"/>
</dbReference>
<dbReference type="SUPFAM" id="SSF52768">
    <property type="entry name" value="Arginase/deacetylase"/>
    <property type="match status" value="1"/>
</dbReference>
<name>HDAC3_HUMAN</name>
<protein>
    <recommendedName>
        <fullName>Histone deacetylase 3</fullName>
        <shortName>HD3</shortName>
        <ecNumber evidence="33 44">3.5.1.98</ecNumber>
    </recommendedName>
    <alternativeName>
        <fullName>Protein deacetylase HDAC3</fullName>
        <ecNumber evidence="19 31 42 43">3.5.1.-</ecNumber>
    </alternativeName>
    <alternativeName>
        <fullName evidence="41">Protein deacylase HDAC3</fullName>
        <ecNumber evidence="33 34 36 37 45">3.5.1.-</ecNumber>
    </alternativeName>
    <alternativeName>
        <fullName>RPD3-2</fullName>
    </alternativeName>
    <alternativeName>
        <fullName>SMAP45</fullName>
    </alternativeName>
</protein>
<organism>
    <name type="scientific">Homo sapiens</name>
    <name type="common">Human</name>
    <dbReference type="NCBI Taxonomy" id="9606"/>
    <lineage>
        <taxon>Eukaryota</taxon>
        <taxon>Metazoa</taxon>
        <taxon>Chordata</taxon>
        <taxon>Craniata</taxon>
        <taxon>Vertebrata</taxon>
        <taxon>Euteleostomi</taxon>
        <taxon>Mammalia</taxon>
        <taxon>Eutheria</taxon>
        <taxon>Euarchontoglires</taxon>
        <taxon>Primates</taxon>
        <taxon>Haplorrhini</taxon>
        <taxon>Catarrhini</taxon>
        <taxon>Hominidae</taxon>
        <taxon>Homo</taxon>
    </lineage>
</organism>
<proteinExistence type="evidence at protein level"/>
<comment type="function">
    <text evidence="1 19 25 26 28 29 30 31 32 33 34 35 36 37 38">Histone deacetylase that catalyzes the deacetylation of lysine residues on the N-terminal part of the core histones (H2A, H2B, H3 and H4), and some other non-histone substrates (PubMed:21030595, PubMed:21444723, PubMed:23911289, PubMed:25301942, PubMed:28167758, PubMed:28497810, PubMed:32404892, PubMed:22230954). Histone deacetylation gives a tag for epigenetic repression and plays an important role in transcriptional regulation, cell cycle progression and developmental events (PubMed:23911289). Histone deacetylases act via the formation of large multiprotein complexes, such as N-Cor repressor complex, which activate the histone deacetylase activity (PubMed:23911289, PubMed:22230954). Participates in the BCL6 transcriptional repressor activity by deacetylating the H3 'Lys-27' (H3K27) on enhancer elements, antagonizing EP300 acetyltransferase activity and repressing proximal gene expression (PubMed:23911289). Acts as a molecular chaperone for shuttling phosphorylated NR2C1 to PML bodies for sumoylation (By similarity). Contributes, together with XBP1 isoform 1, to the activation of NFE2L2-mediated HMOX1 transcription factor gene expression in a PI(3)K/mTORC2/Akt-dependent signaling pathway leading to endothelial cell (EC) survival under disturbed flow/oxidative stress (PubMed:25190803). Regulates both the transcriptional activation and repression phases of the circadian clock in a deacetylase activity-independent manner (By similarity). During the activation phase, promotes the accumulation of ubiquitinated BMAL1 at the E-boxes and during the repression phase, blocks FBXL3-mediated CRY1/2 ubiquitination and promotes the interaction of CRY1 and BMAL1 (By similarity). The NCOR1-HDAC3 complex regulates the circadian expression of the core clock gene BMAL1 and the genes involved in lipid metabolism in the liver (By similarity). Also functions as a deacetylase for non-histone targets, such as KAT5, MEF2D, MAPK14, RARA and STAT3 (PubMed:15653507, PubMed:21030595, PubMed:21444723, PubMed:25301942, PubMed:28167758). Serves as a corepressor of RARA, mediating its deacetylation and repression, leading to inhibition of RARE DNA element binding (PubMed:28167758). In association with RARA, plays a role in the repression of microRNA-10a and thereby in the inflammatory response (PubMed:28167758). In addition to protein deacetylase activity, also acts as a protein-lysine deacylase by recognizing other acyl groups: catalyzes removal of (2E)-butenoyl (crotonyl), lactoyl (lactyl) and 2-hydroxyisobutanoyl (2-hydroxyisobutyryl) acyl groups from lysine residues, leading to protein decrotonylation, delactylation and de-2-hydroxyisobutyrylation, respectively (PubMed:28497810, PubMed:29192674, PubMed:34608293, PubMed:35044827). Catalyzes decrotonylation of MAPRE1/EB1 (PubMed:34608293). Mediates delactylation NBN/NBS1, thereby inhibiting DNA double-strand breaks (DSBs) via homologous recombination (HR) (PubMed:38961290).</text>
</comment>
<comment type="catalytic activity">
    <reaction evidence="28 33 44">
        <text>N(6)-acetyl-L-lysyl-[histone] + H2O = L-lysyl-[histone] + acetate</text>
        <dbReference type="Rhea" id="RHEA:58196"/>
        <dbReference type="Rhea" id="RHEA-COMP:9845"/>
        <dbReference type="Rhea" id="RHEA-COMP:11338"/>
        <dbReference type="ChEBI" id="CHEBI:15377"/>
        <dbReference type="ChEBI" id="CHEBI:29969"/>
        <dbReference type="ChEBI" id="CHEBI:30089"/>
        <dbReference type="ChEBI" id="CHEBI:61930"/>
        <dbReference type="EC" id="3.5.1.98"/>
    </reaction>
    <physiologicalReaction direction="left-to-right" evidence="28 33 44">
        <dbReference type="Rhea" id="RHEA:58197"/>
    </physiologicalReaction>
</comment>
<comment type="catalytic activity">
    <reaction evidence="19 31 42 43">
        <text>N(6)-acetyl-L-lysyl-[protein] + H2O = L-lysyl-[protein] + acetate</text>
        <dbReference type="Rhea" id="RHEA:58108"/>
        <dbReference type="Rhea" id="RHEA-COMP:9752"/>
        <dbReference type="Rhea" id="RHEA-COMP:10731"/>
        <dbReference type="ChEBI" id="CHEBI:15377"/>
        <dbReference type="ChEBI" id="CHEBI:29969"/>
        <dbReference type="ChEBI" id="CHEBI:30089"/>
        <dbReference type="ChEBI" id="CHEBI:61930"/>
    </reaction>
    <physiologicalReaction direction="left-to-right" evidence="19 31 42 43">
        <dbReference type="Rhea" id="RHEA:58109"/>
    </physiologicalReaction>
</comment>
<comment type="catalytic activity">
    <reaction evidence="33 36">
        <text>N(6)-(2E)-butenoyl-L-lysyl-[protein] + H2O = (2E)-2-butenoate + L-lysyl-[protein]</text>
        <dbReference type="Rhea" id="RHEA:69172"/>
        <dbReference type="Rhea" id="RHEA-COMP:9752"/>
        <dbReference type="Rhea" id="RHEA-COMP:13707"/>
        <dbReference type="ChEBI" id="CHEBI:15377"/>
        <dbReference type="ChEBI" id="CHEBI:29969"/>
        <dbReference type="ChEBI" id="CHEBI:35899"/>
        <dbReference type="ChEBI" id="CHEBI:137954"/>
    </reaction>
    <physiologicalReaction direction="left-to-right" evidence="33 36 37">
        <dbReference type="Rhea" id="RHEA:69173"/>
    </physiologicalReaction>
</comment>
<comment type="catalytic activity">
    <reaction evidence="34 37">
        <text>N(6)-(2-hydroxyisobutanoyl)-L-lysyl-[protein] + H2O = 2-hydroxy-2-methylpropanoate + L-lysyl-[protein]</text>
        <dbReference type="Rhea" id="RHEA:69176"/>
        <dbReference type="Rhea" id="RHEA-COMP:9752"/>
        <dbReference type="Rhea" id="RHEA-COMP:15921"/>
        <dbReference type="ChEBI" id="CHEBI:15377"/>
        <dbReference type="ChEBI" id="CHEBI:19641"/>
        <dbReference type="ChEBI" id="CHEBI:29969"/>
        <dbReference type="ChEBI" id="CHEBI:144968"/>
    </reaction>
    <physiologicalReaction direction="left-to-right" evidence="34 37">
        <dbReference type="Rhea" id="RHEA:69177"/>
    </physiologicalReaction>
</comment>
<comment type="catalytic activity">
    <reaction evidence="37 45">
        <text>N(6)-[(S)-lactoyl]-L-lysyl-[protein] + H2O = (S)-lactate + L-lysyl-[protein]</text>
        <dbReference type="Rhea" id="RHEA:81387"/>
        <dbReference type="Rhea" id="RHEA-COMP:9752"/>
        <dbReference type="Rhea" id="RHEA-COMP:19466"/>
        <dbReference type="ChEBI" id="CHEBI:15377"/>
        <dbReference type="ChEBI" id="CHEBI:16651"/>
        <dbReference type="ChEBI" id="CHEBI:29969"/>
        <dbReference type="ChEBI" id="CHEBI:231527"/>
    </reaction>
    <physiologicalReaction direction="left-to-right" evidence="37 45">
        <dbReference type="Rhea" id="RHEA:81388"/>
    </physiologicalReaction>
</comment>
<comment type="cofactor">
    <cofactor evidence="28">
        <name>Zn(2+)</name>
        <dbReference type="ChEBI" id="CHEBI:29105"/>
    </cofactor>
</comment>
<comment type="activity regulation">
    <text evidence="28">Inositol tetraphosphate (1D-myo-inositol 1,4,5,6-tetrakisphosphate) promotes the histone deacetylase activity by acting as an intermolecular glue between HDAC3 and NCOR2, thereby promoting its association with the N-Cor complex, a prerequisite for the histone deacetylase activity.</text>
</comment>
<comment type="subunit">
    <text evidence="1 3 5 6 7 8 9 10 11 12 13 15 16 17 20 21 22 23 24 25 27 28 29 30 32">Interacts with HDAC7 and HDAC9 (PubMed:10655483, PubMed:11466315). Interacts with DAXX, KDM4A, HDAC10 and DACH1 (PubMed:10669754, PubMed:11861901, PubMed:14525983, PubMed:15927959). Found in a complex with NCOR1 and NCOR2 (PubMed:10860984, PubMed:22230954). Component of the N-Cor repressor complex, at least composed of NCOR1, NCOR2, HDAC3, TBL1X, TBL1R, CORO2A and GPS2 (PubMed:11931768). Interacts with BCOR, MJD2A/JHDM3A, NRIP1, PRDM6 and SRY (PubMed:10898795, PubMed:11006275, PubMed:15297880). Interacts with BTBD14B (By similarity). Interacts with GLIS2 (By similarity). Interacts (via the DNA-binding domain) with NR2C1; the interaction recruits phosphorylated NR2C1 to PML bodies for sumoylation (By similarity). Component of the Notch corepressor complex (PubMed:19409814). Interacts with CBFA2T3 and NKAP (PubMed:11533236, PubMed:19409814). Interacts with APEX1; the interaction is not dependent on the acetylated status of APEX1 (PubMed:14633989). Interacts with ZMYND15 (By similarity). Interacts with SMRT/NCOR2 and BCL6 on DNA enhancer elements (PubMed:23911289). Interacts with INSM1 (PubMed:16569215, PubMed:18417529). Interacts with XBP1 isoform 1; the interaction occurs in endothelial cell (EC) under disturbed flow (PubMed:25190803). Interacts (via C-terminus) with CCAR2 (via N-terminus) (PubMed:21030595). Interacts with and deacetylates MEF2D (PubMed:21030595). Interacts with BEND3 (PubMed:21914818). Interacts with NKAPL (By similarity). Interacts with DHX36; this interaction occurs in a RNA-dependent manner (PubMed:18279852). Interacts weakly with CRY1; this interaction is enhanced in the presence of FBXL3 (By similarity). Interacts with FBXL3 and BMAL1 (By similarity). Interacts with NCOR1 (By similarity). Interacts with RARA (PubMed:28167758). Interacts with SETD5 (By similarity).</text>
</comment>
<comment type="subunit">
    <text evidence="18">(Microbial infection) Interacts with human cytomegalovirus (HHV-5) immediate early protein IE1; this interaction decreases histone acetylation and allows transcriptional activation by the virus.</text>
</comment>
<comment type="interaction">
    <interactant intactId="EBI-607682">
        <id>O15379</id>
    </interactant>
    <interactant intactId="EBI-1237481">
        <id>O43823</id>
        <label>AKAP8</label>
    </interactant>
    <organismsDiffer>false</organismsDiffer>
    <experiments>10</experiments>
</comment>
<comment type="interaction">
    <interactant intactId="EBI-607682">
        <id>O15379</id>
    </interactant>
    <interactant intactId="EBI-357530">
        <id>Q9ULX6</id>
        <label>AKAP8L</label>
    </interactant>
    <organismsDiffer>false</organismsDiffer>
    <experiments>5</experiments>
</comment>
<comment type="interaction">
    <interactant intactId="EBI-607682">
        <id>O15379</id>
    </interactant>
    <interactant intactId="EBI-741243">
        <id>Q9UKG1</id>
        <label>APPL1</label>
    </interactant>
    <organismsDiffer>false</organismsDiffer>
    <experiments>2</experiments>
</comment>
<comment type="interaction">
    <interactant intactId="EBI-607682">
        <id>O15379</id>
    </interactant>
    <interactant intactId="EBI-375001">
        <id>P24385</id>
        <label>CCND1</label>
    </interactant>
    <organismsDiffer>false</organismsDiffer>
    <experiments>3</experiments>
</comment>
<comment type="interaction">
    <interactant intactId="EBI-607682">
        <id>O15379</id>
    </interactant>
    <interactant intactId="EBI-6664760">
        <id>P23771</id>
        <label>GATA3</label>
    </interactant>
    <organismsDiffer>false</organismsDiffer>
    <experiments>7</experiments>
</comment>
<comment type="interaction">
    <interactant intactId="EBI-607682">
        <id>O15379</id>
    </interactant>
    <interactant intactId="EBI-713355">
        <id>Q13227</id>
        <label>GPS2</label>
    </interactant>
    <organismsDiffer>false</organismsDiffer>
    <experiments>9</experiments>
</comment>
<comment type="interaction">
    <interactant intactId="EBI-607682">
        <id>O15379</id>
    </interactant>
    <interactant intactId="EBI-301834">
        <id>Q13547</id>
        <label>HDAC1</label>
    </interactant>
    <organismsDiffer>false</organismsDiffer>
    <experiments>2</experiments>
</comment>
<comment type="interaction">
    <interactant intactId="EBI-607682">
        <id>O15379</id>
    </interactant>
    <interactant intactId="EBI-710124">
        <id>O60341</id>
        <label>KDM1A</label>
    </interactant>
    <organismsDiffer>false</organismsDiffer>
    <experiments>4</experiments>
</comment>
<comment type="interaction">
    <interactant intactId="EBI-607682">
        <id>O15379</id>
    </interactant>
    <interactant intactId="EBI-739909">
        <id>Q969R5</id>
        <label>L3MBTL2</label>
    </interactant>
    <organismsDiffer>false</organismsDiffer>
    <experiments>6</experiments>
</comment>
<comment type="interaction">
    <interactant intactId="EBI-607682">
        <id>O15379</id>
    </interactant>
    <interactant intactId="EBI-5650739">
        <id>P43356</id>
        <label>MAGEA2B</label>
    </interactant>
    <organismsDiffer>false</organismsDiffer>
    <experiments>4</experiments>
</comment>
<comment type="interaction">
    <interactant intactId="EBI-607682">
        <id>O15379</id>
    </interactant>
    <interactant intactId="EBI-867196">
        <id>Q9UIS9</id>
        <label>MBD1</label>
    </interactant>
    <organismsDiffer>false</organismsDiffer>
    <experiments>3</experiments>
</comment>
<comment type="interaction">
    <interactant intactId="EBI-607682">
        <id>O15379</id>
    </interactant>
    <interactant intactId="EBI-447544">
        <id>P01106</id>
        <label>MYC</label>
    </interactant>
    <organismsDiffer>false</organismsDiffer>
    <experiments>6</experiments>
</comment>
<comment type="interaction">
    <interactant intactId="EBI-607682">
        <id>O15379</id>
    </interactant>
    <interactant intactId="EBI-347233">
        <id>O75376</id>
        <label>NCOR1</label>
    </interactant>
    <organismsDiffer>false</organismsDiffer>
    <experiments>6</experiments>
</comment>
<comment type="interaction">
    <interactant intactId="EBI-607682">
        <id>O15379</id>
    </interactant>
    <interactant intactId="EBI-80830">
        <id>Q9Y618</id>
        <label>NCOR2</label>
    </interactant>
    <organismsDiffer>false</organismsDiffer>
    <experiments>14</experiments>
</comment>
<comment type="interaction">
    <interactant intactId="EBI-607682">
        <id>O15379</id>
    </interactant>
    <interactant intactId="EBI-3910729">
        <id>Q15466</id>
        <label>NR0B2</label>
    </interactant>
    <organismsDiffer>false</organismsDiffer>
    <experiments>2</experiments>
</comment>
<comment type="interaction">
    <interactant intactId="EBI-607682">
        <id>O15379</id>
    </interactant>
    <interactant intactId="EBI-746484">
        <id>P48552</id>
        <label>NRIP1</label>
    </interactant>
    <organismsDiffer>false</organismsDiffer>
    <experiments>2</experiments>
</comment>
<comment type="interaction">
    <interactant intactId="EBI-607682">
        <id>O15379</id>
    </interactant>
    <interactant intactId="EBI-709599">
        <id>P00558</id>
        <label>PGK1</label>
    </interactant>
    <organismsDiffer>false</organismsDiffer>
    <experiments>2</experiments>
</comment>
<comment type="interaction">
    <interactant intactId="EBI-607682">
        <id>O15379</id>
    </interactant>
    <interactant intactId="EBI-16177310">
        <id>P00558-1</id>
        <label>PGK1</label>
    </interactant>
    <organismsDiffer>false</organismsDiffer>
    <experiments>3</experiments>
</comment>
<comment type="interaction">
    <interactant intactId="EBI-607682">
        <id>O15379</id>
    </interactant>
    <interactant intactId="EBI-1046072">
        <id>P60510</id>
        <label>PPP4C</label>
    </interactant>
    <organismsDiffer>false</organismsDiffer>
    <experiments>2</experiments>
</comment>
<comment type="interaction">
    <interactant intactId="EBI-607682">
        <id>O15379</id>
    </interactant>
    <interactant intactId="EBI-1264675">
        <id>Q15022</id>
        <label>SUZ12</label>
    </interactant>
    <organismsDiffer>false</organismsDiffer>
    <experiments>7</experiments>
</comment>
<comment type="interaction">
    <interactant intactId="EBI-607682">
        <id>O15379</id>
    </interactant>
    <interactant intactId="EBI-301912">
        <id>O09106</id>
        <label>Hdac1</label>
    </interactant>
    <organismsDiffer>true</organismsDiffer>
    <experiments>2</experiments>
</comment>
<comment type="interaction">
    <interactant intactId="EBI-607682">
        <id>O15379</id>
    </interactant>
    <interactant intactId="EBI-6148881">
        <id>P08393</id>
        <label>ICP0</label>
    </interactant>
    <organismsDiffer>true</organismsDiffer>
    <experiments>3</experiments>
</comment>
<comment type="interaction">
    <interactant intactId="EBI-607682">
        <id>O15379</id>
    </interactant>
    <interactant intactId="EBI-349004">
        <id>Q60974</id>
        <label>Ncor1</label>
    </interactant>
    <organismsDiffer>true</organismsDiffer>
    <experiments>2</experiments>
</comment>
<comment type="interaction">
    <interactant intactId="EBI-607682">
        <id>O15379</id>
    </interactant>
    <interactant intactId="EBI-1771626">
        <id>Q8CBD1</id>
        <label>Nrip1</label>
    </interactant>
    <organismsDiffer>true</organismsDiffer>
    <experiments>2</experiments>
</comment>
<comment type="interaction">
    <interactant intactId="EBI-607682">
        <id>O15379</id>
    </interactant>
    <interactant intactId="EBI-779991">
        <id>P12504</id>
        <label>vif</label>
    </interactant>
    <organismsDiffer>true</organismsDiffer>
    <experiments>2</experiments>
</comment>
<comment type="subcellular location">
    <subcellularLocation>
        <location evidence="25">Nucleus</location>
    </subcellularLocation>
    <subcellularLocation>
        <location evidence="21 23">Chromosome</location>
    </subcellularLocation>
    <subcellularLocation>
        <location evidence="30">Cytoplasm</location>
    </subcellularLocation>
    <subcellularLocation>
        <location evidence="25">Cytoplasm</location>
        <location evidence="25">Cytosol</location>
    </subcellularLocation>
    <text evidence="25 30">Colocalizes with XBP1 and AKT1 in the cytoplasm (PubMed:25190803). Predominantly expressed in the nucleus in the presence of CCAR2 (PubMed:21030595).</text>
</comment>
<comment type="alternative products">
    <event type="alternative splicing"/>
    <isoform>
        <id>O15379-1</id>
        <name>1</name>
        <name>RPD3-2B</name>
        <sequence type="displayed"/>
    </isoform>
    <isoform>
        <id>O15379-2</id>
        <name>2</name>
        <name>RPD3-2A</name>
        <sequence type="described" ref="VSP_002079"/>
    </isoform>
</comment>
<comment type="tissue specificity">
    <text evidence="39">Widely expressed.</text>
</comment>
<comment type="induction">
    <text>Up-regulated by disturbed flow in umbilical vein endothelial cells in vitro (PubMed:25190803).</text>
</comment>
<comment type="PTM">
    <text evidence="14">Sumoylated in vitro.</text>
</comment>
<comment type="PTM">
    <text evidence="35">Deubiquitinated on 'Lys-63'-linked ubiquitin chains by USP38; leading to a decreased level of histone acetylation.</text>
</comment>
<comment type="similarity">
    <text evidence="41">Belongs to the histone deacetylase family. HD type 1 subfamily.</text>
</comment>
<comment type="online information" name="Atlas of Genetics and Cytogenetics in Oncology and Haematology">
    <link uri="https://atlasgeneticsoncology.org/gene/40804/HDAC3"/>
</comment>
<reference key="1">
    <citation type="journal article" date="1998" name="Biochem. Biophys. Res. Commun.">
        <title>Differential display cloning of a novel human histone deacetylase (HDAC3) cDNA from PHA-activated immune cells.</title>
        <authorList>
            <person name="Dangond F."/>
            <person name="Hafler D.A."/>
            <person name="Tong J.K."/>
            <person name="Randall J."/>
            <person name="Kojima R."/>
            <person name="Utku N."/>
            <person name="Gullans S.R."/>
        </authorList>
    </citation>
    <scope>NUCLEOTIDE SEQUENCE [GENOMIC DNA / MRNA] (ISOFORM 1)</scope>
    <scope>TISSUE SPECIFICITY</scope>
    <source>
        <tissue>Spleen</tissue>
        <tissue>T-cell</tissue>
    </source>
</reference>
<reference key="2">
    <citation type="journal article" date="1997" name="J. Biol. Chem.">
        <title>Isolation and characterization of cDNAs corresponding to an additional member of the human histone deacetylase gene family.</title>
        <authorList>
            <person name="Yang W.-M."/>
            <person name="Yao Y.-L."/>
            <person name="Sun J.-M."/>
            <person name="Davie J.R."/>
            <person name="Seto E."/>
        </authorList>
    </citation>
    <scope>NUCLEOTIDE SEQUENCE [MRNA] (ISOFORMS 1 AND 2)</scope>
    <source>
        <tissue>Fibroblast</tissue>
    </source>
</reference>
<reference key="3">
    <citation type="journal article" date="1998" name="Proc. Natl. Acad. Sci. U.S.A.">
        <title>Characterization of a human RPD3 ortholog, HDAC3.</title>
        <authorList>
            <person name="Emiliani S."/>
            <person name="Fischle W."/>
            <person name="van Lint C."/>
            <person name="Al-Abed Y."/>
            <person name="Verdin E."/>
        </authorList>
    </citation>
    <scope>NUCLEOTIDE SEQUENCE [MRNA] (ISOFORM 1)</scope>
</reference>
<reference key="4">
    <citation type="journal article" date="1999" name="Genomics">
        <title>Genomic organization and chromosomal localization of the human histone deacetylase 3 gene.</title>
        <authorList>
            <person name="Mahlknecht U."/>
            <person name="Emiliani S."/>
            <person name="Najfeld V."/>
            <person name="Young S."/>
            <person name="Verdin E."/>
        </authorList>
    </citation>
    <scope>NUCLEOTIDE SEQUENCE [GENOMIC DNA] (ISOFORM 1)</scope>
</reference>
<reference key="5">
    <citation type="submission" date="2005-09" db="EMBL/GenBank/DDBJ databases">
        <authorList>
            <person name="Mural R.J."/>
            <person name="Istrail S."/>
            <person name="Sutton G.G."/>
            <person name="Florea L."/>
            <person name="Halpern A.L."/>
            <person name="Mobarry C.M."/>
            <person name="Lippert R."/>
            <person name="Walenz B."/>
            <person name="Shatkay H."/>
            <person name="Dew I."/>
            <person name="Miller J.R."/>
            <person name="Flanigan M.J."/>
            <person name="Edwards N.J."/>
            <person name="Bolanos R."/>
            <person name="Fasulo D."/>
            <person name="Halldorsson B.V."/>
            <person name="Hannenhalli S."/>
            <person name="Turner R."/>
            <person name="Yooseph S."/>
            <person name="Lu F."/>
            <person name="Nusskern D.R."/>
            <person name="Shue B.C."/>
            <person name="Zheng X.H."/>
            <person name="Zhong F."/>
            <person name="Delcher A.L."/>
            <person name="Huson D.H."/>
            <person name="Kravitz S.A."/>
            <person name="Mouchard L."/>
            <person name="Reinert K."/>
            <person name="Remington K.A."/>
            <person name="Clark A.G."/>
            <person name="Waterman M.S."/>
            <person name="Eichler E.E."/>
            <person name="Adams M.D."/>
            <person name="Hunkapiller M.W."/>
            <person name="Myers E.W."/>
            <person name="Venter J.C."/>
        </authorList>
    </citation>
    <scope>NUCLEOTIDE SEQUENCE [LARGE SCALE GENOMIC DNA]</scope>
</reference>
<reference key="6">
    <citation type="journal article" date="2004" name="Genome Res.">
        <title>The status, quality, and expansion of the NIH full-length cDNA project: the Mammalian Gene Collection (MGC).</title>
        <authorList>
            <consortium name="The MGC Project Team"/>
        </authorList>
    </citation>
    <scope>NUCLEOTIDE SEQUENCE [LARGE SCALE MRNA] (ISOFORM 1)</scope>
    <source>
        <tissue>Skin</tissue>
    </source>
</reference>
<reference key="7">
    <citation type="journal article" date="2004" name="Proc. Natl. Acad. Sci. U.S.A.">
        <title>Human cytomegalovirus immediate-early 1 protein facilitates viral replication by antagonizing histone deacetylation.</title>
        <authorList>
            <person name="Nevels M."/>
            <person name="Paulus C."/>
            <person name="Shenk T."/>
        </authorList>
    </citation>
    <scope>INTERACTION WITH HHV-5 IMMEDIATE EARLY PROTEIN IE1 (MICROBIAL INFECTION)</scope>
</reference>
<reference key="8">
    <citation type="submission" date="1998-03" db="EMBL/GenBank/DDBJ databases">
        <authorList>
            <person name="Lynch E.D."/>
            <person name="Lee M.K."/>
            <person name="King M.-C."/>
        </authorList>
    </citation>
    <scope>NUCLEOTIDE SEQUENCE [GENOMIC DNA] OF 95-353 AND 407-428</scope>
</reference>
<reference key="9">
    <citation type="journal article" date="2000" name="J. Biol. Chem.">
        <title>Receptor-interacting protein 140 directly recruits histone deacetylases for gene silencing.</title>
        <authorList>
            <person name="Wei L.-N."/>
            <person name="Hu X."/>
            <person name="Chandra D."/>
            <person name="Seto E."/>
            <person name="Farooqui M."/>
        </authorList>
    </citation>
    <scope>INTERACTION WITH NRIP1</scope>
</reference>
<reference key="10">
    <citation type="journal article" date="2000" name="Mol. Cell. Biol.">
        <title>Sequestration and inhibition of Daxx-mediated transcriptional repression by PML.</title>
        <authorList>
            <person name="Li H."/>
            <person name="Leo C."/>
            <person name="Zhu J."/>
            <person name="Wu X."/>
            <person name="O'Neil J."/>
            <person name="Park E.-J."/>
            <person name="Chen J.D."/>
        </authorList>
    </citation>
    <scope>INTERACTION WITH DAXX</scope>
</reference>
<reference key="11">
    <citation type="journal article" date="2000" name="Proc. Natl. Acad. Sci. U.S.A.">
        <title>Identification of a transcriptional repressor related to the noncatalytic domain of histone deacetylases 4 and 5.</title>
        <authorList>
            <person name="Zhou X."/>
            <person name="Richon V.M."/>
            <person name="Rifkind R.A."/>
            <person name="Marks P.A."/>
        </authorList>
    </citation>
    <scope>INTERACTION WITH HDAC9</scope>
</reference>
<reference key="12">
    <citation type="journal article" date="2000" name="Proc. Natl. Acad. Sci. U.S.A.">
        <title>The histone deacetylase-3 complex contains nuclear receptor corepressors.</title>
        <authorList>
            <person name="Wen Y.-D."/>
            <person name="Perissi V."/>
            <person name="Staszewski L.M."/>
            <person name="Yang W.-M."/>
            <person name="Krones A."/>
            <person name="Glass C.K."/>
            <person name="Rosenfeld M.G."/>
            <person name="Seto E."/>
        </authorList>
    </citation>
    <scope>IDENTIFICATION IN A COMPLEX WITH NCOR1 AND NCOR2</scope>
</reference>
<reference key="13">
    <citation type="journal article" date="2001" name="J. Biol. Chem.">
        <title>Human HDAC7 histone deacetylase activity is associated with HDAC3 in vivo.</title>
        <authorList>
            <person name="Fischle W."/>
            <person name="Dequiedt F."/>
            <person name="Fillion M."/>
            <person name="Hendzel M.J."/>
            <person name="Voelter W."/>
            <person name="Verdin E."/>
        </authorList>
    </citation>
    <scope>INTERACTION WITH HDAC7</scope>
</reference>
<reference key="14">
    <citation type="journal article" date="2001" name="Mol. Cell. Biol.">
        <title>ETO, a target of t(8;21) in acute leukemia, makes distinct contacts with multiple histone deacetylases and binds mSin3A through its oligomerization domain.</title>
        <authorList>
            <person name="Amann J.M."/>
            <person name="Nip J."/>
            <person name="Strom D.K."/>
            <person name="Lutterbach B."/>
            <person name="Harada H."/>
            <person name="Lenny N."/>
            <person name="Downing J.R."/>
            <person name="Meyers S."/>
            <person name="Hiebert S.W."/>
        </authorList>
    </citation>
    <scope>INTERACTION WITH CBFA2T3</scope>
</reference>
<reference key="15">
    <citation type="journal article" date="2002" name="Nucleic Acids Res.">
        <title>Identification of HDAC10, a novel class II human histone deacetylase containing a leucine-rich domain.</title>
        <authorList>
            <person name="Tong J.J."/>
            <person name="Liu J."/>
            <person name="Bertos N.R."/>
            <person name="Yang X.-J."/>
        </authorList>
    </citation>
    <scope>INTERACTION WITH HDAC10</scope>
</reference>
<reference key="16">
    <citation type="journal article" date="2002" name="EMBO J.">
        <title>The SUMO E3 ligase RanBP2 promotes modification of the HDAC4 deacetylase.</title>
        <authorList>
            <person name="Kirsh O."/>
            <person name="Seeler J.-S."/>
            <person name="Pichler A."/>
            <person name="Gast A."/>
            <person name="Mueller S."/>
            <person name="Miska E."/>
            <person name="Mathieu M."/>
            <person name="Harel-Bellan A."/>
            <person name="Kouzarides T."/>
            <person name="Melchior F."/>
            <person name="Dejean A."/>
        </authorList>
    </citation>
    <scope>SUMOYLATION</scope>
</reference>
<reference key="17">
    <citation type="journal article" date="2000" name="Genes Dev.">
        <title>A core SMRT corepressor complex containing HDAC3 and TBL1, a WD40-repeat protein linked to deafness.</title>
        <authorList>
            <person name="Guenther M.G."/>
            <person name="Lane W.S."/>
            <person name="Fischle W."/>
            <person name="Verdin E."/>
            <person name="Lazar M.A."/>
            <person name="Shiekhattar R."/>
        </authorList>
    </citation>
    <scope>IDENTIFICATION BY MASS SPECTROMETRY</scope>
    <scope>COMPONENT OF THE N-COR COMPLEX WITH NCOR2 AND TBL1X</scope>
</reference>
<reference key="18">
    <citation type="journal article" date="2000" name="EMBO J.">
        <title>Both corepressor proteins SMRT and N-CoR exist in large protein complexes containing HDAC3.</title>
        <authorList>
            <person name="Li J."/>
            <person name="Wang J."/>
            <person name="Wang J."/>
            <person name="Nawaz Z."/>
            <person name="Liu J.M."/>
            <person name="Qin J."/>
            <person name="Wong J."/>
        </authorList>
    </citation>
    <scope>COMPONENT OF THE N-COR COMPLEX WITH NCOR2 AND HDAC3</scope>
</reference>
<reference key="19">
    <citation type="journal article" date="2000" name="Genes Dev.">
        <title>BCoR, a novel corepressor involved in BCL-6 repression.</title>
        <authorList>
            <person name="Huynh K.D."/>
            <person name="Fischle W."/>
            <person name="Verdin E."/>
            <person name="Bardwell V.J."/>
        </authorList>
    </citation>
    <scope>INTERACTION WITH BCOR</scope>
</reference>
<reference key="20">
    <citation type="journal article" date="2002" name="Mol. Cell">
        <title>The N-CoR-HDAC3 nuclear receptor corepressor complex inhibits the JNK pathway through the integral subunit GPS2.</title>
        <authorList>
            <person name="Zhang J."/>
            <person name="Kalkum M."/>
            <person name="Chait B.T."/>
            <person name="Roeder R.G."/>
        </authorList>
    </citation>
    <scope>COMPONENT OF THE N-COR COMPLEX WITH NCOR1; NCOR2; GPS2; TBL1R AND TBL1X</scope>
</reference>
<reference key="21">
    <citation type="journal article" date="2003" name="EMBO J.">
        <title>Purification and functional characterization of the human N-CoR complex: the roles of HDAC3, TBL1 and TBLR1.</title>
        <authorList>
            <person name="Yoon H.-G."/>
            <person name="Chan D.W."/>
            <person name="Huang Z.-Q."/>
            <person name="Li J."/>
            <person name="Fondell J.D."/>
            <person name="Qin J."/>
            <person name="Wong J."/>
        </authorList>
    </citation>
    <scope>COMPONENT OF THE N-COR COMPLEX WITH TBL1R; TBL1X AND CORO2A</scope>
</reference>
<reference key="22">
    <citation type="journal article" date="2003" name="EMBO J.">
        <title>Role of acetylated human AP-endonuclease (APE1/Ref-1) in regulation of the parathyroid hormone gene.</title>
        <authorList>
            <person name="Bhakat K.K."/>
            <person name="Izumi T."/>
            <person name="Yang S.H."/>
            <person name="Hazra T.K."/>
            <person name="Mitra S."/>
        </authorList>
    </citation>
    <scope>INTERACTION WITH APEX1</scope>
</reference>
<reference key="23">
    <citation type="journal article" date="2003" name="J. Biol. Chem.">
        <title>DACH1 inhibits transforming growth factor-beta signaling through binding Smad4.</title>
        <authorList>
            <person name="Wu K."/>
            <person name="Yang Y."/>
            <person name="Wang C."/>
            <person name="Davoli M.A."/>
            <person name="D'Amico M."/>
            <person name="Li A."/>
            <person name="Cveklova K."/>
            <person name="Kozmik Z."/>
            <person name="Lisanti M.P."/>
            <person name="Russell R.G."/>
            <person name="Cvekl A."/>
            <person name="Pestell R.G."/>
        </authorList>
    </citation>
    <scope>INTERACTION WITH DACH1</scope>
</reference>
<reference key="24">
    <citation type="journal article" date="2004" name="EMBO J.">
        <title>Regulation of human SRY subcellular distribution by its acetylation/deacetylation.</title>
        <authorList>
            <person name="Thevenet L."/>
            <person name="Mejean C."/>
            <person name="Moniot B."/>
            <person name="Bonneaud N."/>
            <person name="Galeotti N."/>
            <person name="Aldrian-Herrada G."/>
            <person name="Poulat F."/>
            <person name="Berta P."/>
            <person name="Benkirane M."/>
            <person name="Boizet-Bonhoure B."/>
        </authorList>
    </citation>
    <scope>INTERACTION WITH SRY</scope>
</reference>
<reference key="25">
    <citation type="journal article" date="2005" name="J. Biol. Chem.">
        <title>Functional characterization of JMJD2A, a histone deacetylase- and retinoblastoma-binding protein.</title>
        <authorList>
            <person name="Gray S.G."/>
            <person name="Iglesias A.H."/>
            <person name="Lizcano F."/>
            <person name="Villanueva R."/>
            <person name="Camelo S."/>
            <person name="Jingu H."/>
            <person name="Teh B.T."/>
            <person name="Koibuchi N."/>
            <person name="Chin W.W."/>
            <person name="Kokkotou E."/>
            <person name="Dangond F."/>
        </authorList>
    </citation>
    <scope>INTERACTION WITH KDM4A</scope>
</reference>
<reference key="26">
    <citation type="journal article" date="2005" name="Science">
        <title>Stat3 dimerization regulated by reversible acetylation of a single lysine residue.</title>
        <authorList>
            <person name="Yuan Z.L."/>
            <person name="Guan Y.J."/>
            <person name="Chatterjee D."/>
            <person name="Chin Y.E."/>
        </authorList>
    </citation>
    <scope>FUNCTION</scope>
    <scope>CATALYTIC ACTIVITY</scope>
</reference>
<reference key="27">
    <citation type="journal article" date="2006" name="Biochem. J.">
        <title>INSM1 functions as a transcriptional repressor of the neuroD/beta2 gene through the recruitment of cyclin D1 and histone deacetylases.</title>
        <authorList>
            <person name="Liu W.D."/>
            <person name="Wang H.W."/>
            <person name="Muguira M."/>
            <person name="Breslin M.B."/>
            <person name="Lan M.S."/>
        </authorList>
    </citation>
    <scope>SUBCELLULAR LOCATION</scope>
    <scope>INTERACTION WITH INSM1</scope>
</reference>
<reference key="28">
    <citation type="journal article" date="2006" name="Cell">
        <title>Global, in vivo, and site-specific phosphorylation dynamics in signaling networks.</title>
        <authorList>
            <person name="Olsen J.V."/>
            <person name="Blagoev B."/>
            <person name="Gnad F."/>
            <person name="Macek B."/>
            <person name="Kumar C."/>
            <person name="Mortensen P."/>
            <person name="Mann M."/>
        </authorList>
    </citation>
    <scope>IDENTIFICATION BY MASS SPECTROMETRY [LARGE SCALE ANALYSIS]</scope>
    <source>
        <tissue>Cervix carcinoma</tissue>
    </source>
</reference>
<reference key="29">
    <citation type="journal article" date="2008" name="J. Endocrinol.">
        <title>Identification of an INSM1-binding site in the insulin promoter: negative regulation of the insulin gene transcription.</title>
        <authorList>
            <person name="Wang H.W."/>
            <person name="Muguira M."/>
            <person name="Liu W.D."/>
            <person name="Zhang T."/>
            <person name="Chen C."/>
            <person name="Aucoin R."/>
            <person name="Breslin M.B."/>
            <person name="Lan M.S."/>
        </authorList>
    </citation>
    <scope>SUBCELLULAR LOCATION</scope>
    <scope>INTERACTION WITH INSM1</scope>
</reference>
<reference key="30">
    <citation type="journal article" date="2008" name="Exp. Cell Res.">
        <title>Transcription-dependent nucleolar cap localization and possible nuclear function of DExH RNA helicase RHAU.</title>
        <authorList>
            <person name="Iwamoto F."/>
            <person name="Stadler M."/>
            <person name="Chalupnikova K."/>
            <person name="Oakeley E."/>
            <person name="Nagamine Y."/>
        </authorList>
    </citation>
    <scope>INTERACTION WITH DHX36</scope>
</reference>
<reference key="31">
    <citation type="journal article" date="2009" name="Immunity">
        <title>NKAP is a transcriptional repressor of notch signaling and is required for T cell development.</title>
        <authorList>
            <person name="Pajerowski A.G."/>
            <person name="Nguyen C."/>
            <person name="Aghajanian H."/>
            <person name="Shapiro M.J."/>
            <person name="Shapiro V.S."/>
        </authorList>
    </citation>
    <scope>INTERACTION WITH NKAP</scope>
</reference>
<reference key="32">
    <citation type="journal article" date="2009" name="Sci. Signal.">
        <title>Quantitative phosphoproteomic analysis of T cell receptor signaling reveals system-wide modulation of protein-protein interactions.</title>
        <authorList>
            <person name="Mayya V."/>
            <person name="Lundgren D.H."/>
            <person name="Hwang S.-I."/>
            <person name="Rezaul K."/>
            <person name="Wu L."/>
            <person name="Eng J.K."/>
            <person name="Rodionov V."/>
            <person name="Han D.K."/>
        </authorList>
    </citation>
    <scope>PHOSPHORYLATION [LARGE SCALE ANALYSIS] AT SER-424</scope>
    <scope>IDENTIFICATION BY MASS SPECTROMETRY [LARGE SCALE ANALYSIS]</scope>
    <source>
        <tissue>Leukemic T-cell</tissue>
    </source>
</reference>
<reference key="33">
    <citation type="journal article" date="2010" name="J. Biol. Chem.">
        <title>HDAC3 is negatively regulated by the nuclear protein DBC1.</title>
        <authorList>
            <person name="Chini C.C."/>
            <person name="Escande C."/>
            <person name="Nin V."/>
            <person name="Chini E.N."/>
        </authorList>
    </citation>
    <scope>FUNCTION</scope>
    <scope>CATALYTIC ACTIVITY</scope>
    <scope>INTERACTION WITH CCAR2 AND MEF2D</scope>
    <scope>SUBCELLULAR LOCATION</scope>
</reference>
<reference key="34">
    <citation type="journal article" date="2011" name="BMC Syst. Biol.">
        <title>Initial characterization of the human central proteome.</title>
        <authorList>
            <person name="Burkard T.R."/>
            <person name="Planyavsky M."/>
            <person name="Kaupe I."/>
            <person name="Breitwieser F.P."/>
            <person name="Buerckstuemmer T."/>
            <person name="Bennett K.L."/>
            <person name="Superti-Furga G."/>
            <person name="Colinge J."/>
        </authorList>
    </citation>
    <scope>IDENTIFICATION BY MASS SPECTROMETRY [LARGE SCALE ANALYSIS]</scope>
</reference>
<reference key="35">
    <citation type="journal article" date="2011" name="J. Cell Sci.">
        <title>A BEN-domain-containing protein associates with heterochromatin and represses transcription.</title>
        <authorList>
            <person name="Sathyan K.M."/>
            <person name="Shen Z."/>
            <person name="Tripathi V."/>
            <person name="Prasanth K.V."/>
            <person name="Prasanth S.G."/>
        </authorList>
    </citation>
    <scope>INTERACTION WITH BEND3</scope>
</reference>
<reference key="36">
    <citation type="journal article" date="2011" name="Mol. Cell. Biol.">
        <title>Acetylation of a conserved lysine residue in the ATP binding pocket of p38 augments its kinase activity during hypertrophy of cardiomyocytes.</title>
        <authorList>
            <person name="Pillai V.B."/>
            <person name="Sundaresan N.R."/>
            <person name="Samant S.A."/>
            <person name="Wolfgeher D."/>
            <person name="Trivedi C.M."/>
            <person name="Gupta M.P."/>
        </authorList>
    </citation>
    <scope>FUNCTION IN DEACETYLATION OF MAPK14</scope>
</reference>
<reference key="37">
    <citation type="journal article" date="2013" name="Cell Rep.">
        <title>A hybrid mechanism of action for BCL6 in B cells defined by formation of functionally distinct complexes at enhancers and promoters.</title>
        <authorList>
            <person name="Hatzi K."/>
            <person name="Jiang Y."/>
            <person name="Huang C."/>
            <person name="Garrett-Bakelman F."/>
            <person name="Gearhart M.D."/>
            <person name="Giannopoulou E.G."/>
            <person name="Zumbo P."/>
            <person name="Kirouac K."/>
            <person name="Bhaskara S."/>
            <person name="Polo J.M."/>
            <person name="Kormaksson M."/>
            <person name="Mackerell A.D. Jr."/>
            <person name="Xue F."/>
            <person name="Mason C.E."/>
            <person name="Hiebert S.W."/>
            <person name="Prive G.G."/>
            <person name="Cerchietti L."/>
            <person name="Bardwell V.J."/>
            <person name="Elemento O."/>
            <person name="Melnick A."/>
        </authorList>
    </citation>
    <scope>FUNCTION IN DEACETYLATION OF H3K27</scope>
    <scope>CATALYTIC ACTIVITY</scope>
    <scope>IDENTIFICATION IN A COMPLEX WITH BCL6 AND NCOR2</scope>
</reference>
<reference key="38">
    <citation type="journal article" date="2013" name="J. Proteome Res.">
        <title>Toward a comprehensive characterization of a human cancer cell phosphoproteome.</title>
        <authorList>
            <person name="Zhou H."/>
            <person name="Di Palma S."/>
            <person name="Preisinger C."/>
            <person name="Peng M."/>
            <person name="Polat A.N."/>
            <person name="Heck A.J."/>
            <person name="Mohammed S."/>
        </authorList>
    </citation>
    <scope>PHOSPHORYLATION [LARGE SCALE ANALYSIS] AT SER-424</scope>
    <scope>IDENTIFICATION BY MASS SPECTROMETRY [LARGE SCALE ANALYSIS]</scope>
    <source>
        <tissue>Erythroleukemia</tissue>
    </source>
</reference>
<reference key="39">
    <citation type="journal article" date="2014" name="J. Biol. Chem.">
        <title>Unspliced X-box-binding protein 1 (XBP1) protects endothelial cells from oxidative stress through interaction with histone deacetylase 3.</title>
        <authorList>
            <person name="Martin D."/>
            <person name="Li Y."/>
            <person name="Yang J."/>
            <person name="Wang G."/>
            <person name="Margariti A."/>
            <person name="Jiang Z."/>
            <person name="Yu H."/>
            <person name="Zampetaki A."/>
            <person name="Hu Y."/>
            <person name="Xu Q."/>
            <person name="Zeng L."/>
        </authorList>
    </citation>
    <scope>FUNCTION</scope>
    <scope>INTERACTION WITH XBP1</scope>
    <scope>SUBCELLULAR LOCATION</scope>
    <scope>INDUCTION</scope>
</reference>
<reference key="40">
    <citation type="journal article" date="2014" name="J. Biol. Chem.">
        <title>Regulation of histone acetyltransferase TIP60 function by histone deacetylase 3.</title>
        <authorList>
            <person name="Yi J."/>
            <person name="Huang X."/>
            <person name="Yang Y."/>
            <person name="Zhu W.G."/>
            <person name="Gu W."/>
            <person name="Luo J."/>
        </authorList>
    </citation>
    <scope>FUNCTION</scope>
    <scope>CATALYTIC ACTIVITY</scope>
    <scope>MUTAGENESIS OF TYR-298</scope>
</reference>
<reference key="41">
    <citation type="journal article" date="2017" name="Cell Res.">
        <title>Class I histone deacetylases are major histone decrotonylases: evidence for critical and broad function of histone crotonylation in transcription.</title>
        <authorList>
            <person name="Wei W."/>
            <person name="Liu X."/>
            <person name="Chen J."/>
            <person name="Gao S."/>
            <person name="Lu L."/>
            <person name="Zhang H."/>
            <person name="Ding G."/>
            <person name="Wang Z."/>
            <person name="Chen Z."/>
            <person name="Shi T."/>
            <person name="Li J."/>
            <person name="Yu J."/>
            <person name="Wong J."/>
        </authorList>
    </citation>
    <scope>FUNCTION</scope>
    <scope>CATALYTIC ACTIVITY</scope>
    <scope>MUTAGENESIS OF 130-ALA--GLY-132</scope>
</reference>
<reference key="42">
    <citation type="journal article" date="2017" name="Proc. Natl. Acad. Sci. U.S.A.">
        <title>MicroRNA-10a is crucial for endothelial response to different flow patterns via interaction of retinoid acid receptors and histone deacetylases.</title>
        <authorList>
            <person name="Lee D.Y."/>
            <person name="Lin T.E."/>
            <person name="Lee C.I."/>
            <person name="Zhou J."/>
            <person name="Huang Y.H."/>
            <person name="Lee P.L."/>
            <person name="Shih Y.T."/>
            <person name="Chien S."/>
            <person name="Chiu J.J."/>
        </authorList>
    </citation>
    <scope>FUNCTION</scope>
    <scope>INTERACTION WITH RARA</scope>
</reference>
<reference key="43">
    <citation type="journal article" date="2018" name="Cell Res.">
        <title>Landscape of the regulatory elements for lysine 2-hydroxyisobutyrylation pathway.</title>
        <authorList>
            <person name="Huang H."/>
            <person name="Luo Z."/>
            <person name="Qi S."/>
            <person name="Huang J."/>
            <person name="Xu P."/>
            <person name="Wang X."/>
            <person name="Gao L."/>
            <person name="Li F."/>
            <person name="Wang J."/>
            <person name="Zhao W."/>
            <person name="Gu W."/>
            <person name="Chen Z."/>
            <person name="Dai L."/>
            <person name="Dai J."/>
            <person name="Zhao Y."/>
        </authorList>
    </citation>
    <scope>FUNCTION</scope>
    <scope>CATALYTIC ACTIVITY</scope>
</reference>
<reference key="44">
    <citation type="journal article" date="2020" name="Oncogenesis">
        <title>USP38 regulates the stemness and chemoresistance of human colorectal cancer via regulation of HDAC3.</title>
        <authorList>
            <person name="Zhan W."/>
            <person name="Liao X."/>
            <person name="Liu J."/>
            <person name="Tian T."/>
            <person name="Yu L."/>
            <person name="Li R."/>
        </authorList>
    </citation>
    <scope>FUNCTION</scope>
    <scope>DEUBIQUITINATION BY USP38</scope>
</reference>
<reference key="45">
    <citation type="journal article" date="2021" name="Nat. Chem. Biol.">
        <title>Dynamic crotonylation of EB1 by TIP60 ensures accurate spindle positioning in mitosis.</title>
        <authorList>
            <person name="Song X."/>
            <person name="Yang F."/>
            <person name="Liu X."/>
            <person name="Xia P."/>
            <person name="Yin W."/>
            <person name="Wang Z."/>
            <person name="Wang Y."/>
            <person name="Yuan X."/>
            <person name="Dou Z."/>
            <person name="Jiang K."/>
            <person name="Ma M."/>
            <person name="Hu B."/>
            <person name="Zhang R."/>
            <person name="Xu C."/>
            <person name="Zhang Z."/>
            <person name="Ruan K."/>
            <person name="Tian R."/>
            <person name="Li L."/>
            <person name="Liu T."/>
            <person name="Hill D.L."/>
            <person name="Zang J."/>
            <person name="Liu X."/>
            <person name="Li J."/>
            <person name="Cheng J."/>
            <person name="Yao X."/>
        </authorList>
    </citation>
    <scope>FUNCTION</scope>
    <scope>CATALYTIC ACTIVITY</scope>
    <scope>MUTAGENESIS OF 130-ALA--GLY-132</scope>
</reference>
<reference key="46">
    <citation type="journal article" date="2022" name="Sci. Adv.">
        <title>Class I histone deacetylases (HDAC1-3) are histone lysine delactylases.</title>
        <authorList>
            <person name="Moreno-Yruela C."/>
            <person name="Zhang D."/>
            <person name="Wei W."/>
            <person name="Baek M."/>
            <person name="Liu W."/>
            <person name="Gao J."/>
            <person name="Dankova D."/>
            <person name="Nielsen A.L."/>
            <person name="Bolding J.E."/>
            <person name="Yang L."/>
            <person name="Jameson S.T."/>
            <person name="Wong J."/>
            <person name="Olsen C.A."/>
            <person name="Zhao Y."/>
        </authorList>
    </citation>
    <scope>FUNCTION</scope>
    <scope>CATALYTIC ACTIVITY</scope>
</reference>
<reference key="47">
    <citation type="journal article" date="2024" name="Nature">
        <title>NBS1 lactylation is required for efficient DNA repair and chemotherapy resistance.</title>
        <authorList>
            <person name="Chen H."/>
            <person name="Li Y."/>
            <person name="Li H."/>
            <person name="Chen X."/>
            <person name="Fu H."/>
            <person name="Mao D."/>
            <person name="Chen W."/>
            <person name="Lan L."/>
            <person name="Wang C."/>
            <person name="Hu K."/>
            <person name="Li J."/>
            <person name="Zhu C."/>
            <person name="Evans I."/>
            <person name="Cheung E."/>
            <person name="Lu D."/>
            <person name="He Y."/>
            <person name="Behrens A."/>
            <person name="Yin D."/>
            <person name="Zhang C."/>
        </authorList>
    </citation>
    <scope>FUNCTION</scope>
    <scope>CATALYTIC ACTIVITY</scope>
</reference>
<reference evidence="46" key="48">
    <citation type="journal article" date="2012" name="Nature">
        <title>Structure of HDAC3 bound to co-repressor and inositol tetraphosphate.</title>
        <authorList>
            <person name="Watson P.J."/>
            <person name="Fairall L."/>
            <person name="Santos G.M."/>
            <person name="Schwabe J.W."/>
        </authorList>
    </citation>
    <scope>X-RAY CRYSTALLOGRAPHY (2.06 ANGSTROMS) OF 1-376 IN COMPLEX WITH ZINC; INOSITOL AND NCOR2</scope>
    <scope>FUNCTION</scope>
    <scope>CATALYTIC ACTIVITY</scope>
    <scope>COFACTOR</scope>
    <scope>INTERACTION WITH NCOR2</scope>
    <scope>MUTAGENESIS OF 17-HIS--LYS-25; 264-ASP-ARG-265 AND ARG-265</scope>
</reference>
<gene>
    <name type="primary">HDAC3</name>
</gene>
<evidence type="ECO:0000250" key="1">
    <source>
        <dbReference type="UniProtKB" id="O88895"/>
    </source>
</evidence>
<evidence type="ECO:0000250" key="2">
    <source>
        <dbReference type="UniProtKB" id="Q13547"/>
    </source>
</evidence>
<evidence type="ECO:0000250" key="3">
    <source>
        <dbReference type="UniProtKB" id="Q6P6W3"/>
    </source>
</evidence>
<evidence type="ECO:0000256" key="4">
    <source>
        <dbReference type="SAM" id="MobiDB-lite"/>
    </source>
</evidence>
<evidence type="ECO:0000269" key="5">
    <source>
    </source>
</evidence>
<evidence type="ECO:0000269" key="6">
    <source>
    </source>
</evidence>
<evidence type="ECO:0000269" key="7">
    <source>
    </source>
</evidence>
<evidence type="ECO:0000269" key="8">
    <source>
    </source>
</evidence>
<evidence type="ECO:0000269" key="9">
    <source>
    </source>
</evidence>
<evidence type="ECO:0000269" key="10">
    <source>
    </source>
</evidence>
<evidence type="ECO:0000269" key="11">
    <source>
    </source>
</evidence>
<evidence type="ECO:0000269" key="12">
    <source>
    </source>
</evidence>
<evidence type="ECO:0000269" key="13">
    <source>
    </source>
</evidence>
<evidence type="ECO:0000269" key="14">
    <source>
    </source>
</evidence>
<evidence type="ECO:0000269" key="15">
    <source>
    </source>
</evidence>
<evidence type="ECO:0000269" key="16">
    <source>
    </source>
</evidence>
<evidence type="ECO:0000269" key="17">
    <source>
    </source>
</evidence>
<evidence type="ECO:0000269" key="18">
    <source>
    </source>
</evidence>
<evidence type="ECO:0000269" key="19">
    <source>
    </source>
</evidence>
<evidence type="ECO:0000269" key="20">
    <source>
    </source>
</evidence>
<evidence type="ECO:0000269" key="21">
    <source>
    </source>
</evidence>
<evidence type="ECO:0000269" key="22">
    <source>
    </source>
</evidence>
<evidence type="ECO:0000269" key="23">
    <source>
    </source>
</evidence>
<evidence type="ECO:0000269" key="24">
    <source>
    </source>
</evidence>
<evidence type="ECO:0000269" key="25">
    <source>
    </source>
</evidence>
<evidence type="ECO:0000269" key="26">
    <source>
    </source>
</evidence>
<evidence type="ECO:0000269" key="27">
    <source>
    </source>
</evidence>
<evidence type="ECO:0000269" key="28">
    <source>
    </source>
</evidence>
<evidence type="ECO:0000269" key="29">
    <source>
    </source>
</evidence>
<evidence type="ECO:0000269" key="30">
    <source>
    </source>
</evidence>
<evidence type="ECO:0000269" key="31">
    <source>
    </source>
</evidence>
<evidence type="ECO:0000269" key="32">
    <source>
    </source>
</evidence>
<evidence type="ECO:0000269" key="33">
    <source>
    </source>
</evidence>
<evidence type="ECO:0000269" key="34">
    <source>
    </source>
</evidence>
<evidence type="ECO:0000269" key="35">
    <source>
    </source>
</evidence>
<evidence type="ECO:0000269" key="36">
    <source>
    </source>
</evidence>
<evidence type="ECO:0000269" key="37">
    <source>
    </source>
</evidence>
<evidence type="ECO:0000269" key="38">
    <source>
    </source>
</evidence>
<evidence type="ECO:0000269" key="39">
    <source>
    </source>
</evidence>
<evidence type="ECO:0000303" key="40">
    <source>
    </source>
</evidence>
<evidence type="ECO:0000305" key="41"/>
<evidence type="ECO:0000305" key="42">
    <source>
    </source>
</evidence>
<evidence type="ECO:0000305" key="43">
    <source>
    </source>
</evidence>
<evidence type="ECO:0000305" key="44">
    <source>
    </source>
</evidence>
<evidence type="ECO:0000305" key="45">
    <source>
    </source>
</evidence>
<evidence type="ECO:0007744" key="46">
    <source>
        <dbReference type="PDB" id="4A69"/>
    </source>
</evidence>
<evidence type="ECO:0007744" key="47">
    <source>
    </source>
</evidence>
<evidence type="ECO:0007744" key="48">
    <source>
    </source>
</evidence>
<evidence type="ECO:0007829" key="49">
    <source>
        <dbReference type="PDB" id="4A69"/>
    </source>
</evidence>
<feature type="chain" id="PRO_0000114696" description="Histone deacetylase 3">
    <location>
        <begin position="1"/>
        <end position="428"/>
    </location>
</feature>
<feature type="region of interest" description="Histone deacetylase">
    <location>
        <begin position="3"/>
        <end position="316"/>
    </location>
</feature>
<feature type="region of interest" description="Disordered" evidence="4">
    <location>
        <begin position="388"/>
        <end position="428"/>
    </location>
</feature>
<feature type="compositionally biased region" description="Basic and acidic residues" evidence="4">
    <location>
        <begin position="388"/>
        <end position="405"/>
    </location>
</feature>
<feature type="compositionally biased region" description="Basic and acidic residues" evidence="4">
    <location>
        <begin position="415"/>
        <end position="428"/>
    </location>
</feature>
<feature type="active site" evidence="2">
    <location>
        <position position="135"/>
    </location>
</feature>
<feature type="binding site" evidence="28 46">
    <location>
        <position position="17"/>
    </location>
    <ligand>
        <name>1D-myo-inositol 1,4,5,6-tetrakisphosphate</name>
        <dbReference type="ChEBI" id="CHEBI:57627"/>
    </ligand>
</feature>
<feature type="binding site" evidence="28 46">
    <location>
        <position position="21"/>
    </location>
    <ligand>
        <name>1D-myo-inositol 1,4,5,6-tetrakisphosphate</name>
        <dbReference type="ChEBI" id="CHEBI:57627"/>
    </ligand>
</feature>
<feature type="binding site" evidence="28 46">
    <location>
        <position position="25"/>
    </location>
    <ligand>
        <name>1D-myo-inositol 1,4,5,6-tetrakisphosphate</name>
        <dbReference type="ChEBI" id="CHEBI:57627"/>
    </ligand>
</feature>
<feature type="binding site" evidence="28 46">
    <location>
        <position position="170"/>
    </location>
    <ligand>
        <name>Zn(2+)</name>
        <dbReference type="ChEBI" id="CHEBI:29105"/>
    </ligand>
</feature>
<feature type="binding site" evidence="28 46">
    <location>
        <position position="172"/>
    </location>
    <ligand>
        <name>Zn(2+)</name>
        <dbReference type="ChEBI" id="CHEBI:29105"/>
    </ligand>
</feature>
<feature type="binding site" evidence="28 46">
    <location>
        <position position="259"/>
    </location>
    <ligand>
        <name>Zn(2+)</name>
        <dbReference type="ChEBI" id="CHEBI:29105"/>
    </ligand>
</feature>
<feature type="binding site" evidence="28 46">
    <location>
        <position position="265"/>
    </location>
    <ligand>
        <name>1D-myo-inositol 1,4,5,6-tetrakisphosphate</name>
        <dbReference type="ChEBI" id="CHEBI:57627"/>
    </ligand>
</feature>
<feature type="modified residue" description="Phosphoserine" evidence="47 48">
    <location>
        <position position="424"/>
    </location>
</feature>
<feature type="splice variant" id="VSP_002079" description="In isoform 2." evidence="40">
    <original>MAKTVAYFYDPDVGN</original>
    <variation>MIVFKPYQASQHDMCR</variation>
    <location>
        <begin position="1"/>
        <end position="15"/>
    </location>
</feature>
<feature type="sequence variant" id="VAR_033988" description="In dbSNP:rs34901743.">
    <original>N</original>
    <variation>S</variation>
    <location>
        <position position="411"/>
    </location>
</feature>
<feature type="mutagenesis site" description="Abolished interaction with NCOR2 and activation of the histone deacetylase activity." evidence="28">
    <original>HYGAGHPMK</original>
    <variation>CYAAGHPMI</variation>
    <location>
        <begin position="17"/>
        <end position="25"/>
    </location>
</feature>
<feature type="mutagenesis site" description="Impaired protein deacetylase activity without affecting the protein decrotonylase activity." evidence="33 36">
    <original>AGG</original>
    <variation>VRPP</variation>
    <location>
        <begin position="130"/>
        <end position="132"/>
    </location>
</feature>
<feature type="mutagenesis site" description="Abolished interaction with NCOR2 and activation of the histone deacetylase activity." evidence="28">
    <original>DR</original>
    <variation>PM</variation>
    <location>
        <begin position="264"/>
        <end position="265"/>
    </location>
</feature>
<feature type="mutagenesis site" description="Abolished interaction with NCOR2 and activation of the histone deacetylase activity." evidence="28">
    <original>R</original>
    <variation>P</variation>
    <location>
        <position position="265"/>
    </location>
</feature>
<feature type="mutagenesis site" description="Strongly decreased protein deacetylase activity." evidence="31">
    <original>Y</original>
    <variation>F</variation>
    <location>
        <position position="298"/>
    </location>
</feature>
<feature type="sequence conflict" description="In Ref. 1; AAC52038." evidence="41" ref="1">
    <original>R</original>
    <variation>L</variation>
    <location>
        <position position="359"/>
    </location>
</feature>
<feature type="strand" evidence="49">
    <location>
        <begin position="5"/>
        <end position="8"/>
    </location>
</feature>
<feature type="turn" evidence="49">
    <location>
        <begin position="11"/>
        <end position="14"/>
    </location>
</feature>
<feature type="helix" evidence="49">
    <location>
        <begin position="27"/>
        <end position="38"/>
    </location>
</feature>
<feature type="helix" evidence="49">
    <location>
        <begin position="41"/>
        <end position="44"/>
    </location>
</feature>
<feature type="strand" evidence="49">
    <location>
        <begin position="45"/>
        <end position="48"/>
    </location>
</feature>
<feature type="helix" evidence="49">
    <location>
        <begin position="55"/>
        <end position="58"/>
    </location>
</feature>
<feature type="turn" evidence="49">
    <location>
        <begin position="59"/>
        <end position="61"/>
    </location>
</feature>
<feature type="helix" evidence="49">
    <location>
        <begin position="64"/>
        <end position="72"/>
    </location>
</feature>
<feature type="turn" evidence="49">
    <location>
        <begin position="75"/>
        <end position="77"/>
    </location>
</feature>
<feature type="helix" evidence="49">
    <location>
        <begin position="78"/>
        <end position="81"/>
    </location>
</feature>
<feature type="helix" evidence="49">
    <location>
        <begin position="82"/>
        <end position="88"/>
    </location>
</feature>
<feature type="strand" evidence="49">
    <location>
        <begin position="91"/>
        <end position="94"/>
    </location>
</feature>
<feature type="helix" evidence="49">
    <location>
        <begin position="100"/>
        <end position="119"/>
    </location>
</feature>
<feature type="strand" evidence="49">
    <location>
        <begin position="124"/>
        <end position="128"/>
    </location>
</feature>
<feature type="strand" evidence="49">
    <location>
        <begin position="145"/>
        <end position="147"/>
    </location>
</feature>
<feature type="helix" evidence="49">
    <location>
        <begin position="149"/>
        <end position="157"/>
    </location>
</feature>
<feature type="turn" evidence="49">
    <location>
        <begin position="158"/>
        <end position="160"/>
    </location>
</feature>
<feature type="strand" evidence="49">
    <location>
        <begin position="164"/>
        <end position="168"/>
    </location>
</feature>
<feature type="strand" evidence="49">
    <location>
        <begin position="170"/>
        <end position="172"/>
    </location>
</feature>
<feature type="helix" evidence="49">
    <location>
        <begin position="175"/>
        <end position="180"/>
    </location>
</feature>
<feature type="turn" evidence="49">
    <location>
        <begin position="181"/>
        <end position="183"/>
    </location>
</feature>
<feature type="strand" evidence="49">
    <location>
        <begin position="185"/>
        <end position="194"/>
    </location>
</feature>
<feature type="helix" evidence="49">
    <location>
        <begin position="212"/>
        <end position="214"/>
    </location>
</feature>
<feature type="strand" evidence="49">
    <location>
        <begin position="217"/>
        <end position="223"/>
    </location>
</feature>
<feature type="helix" evidence="49">
    <location>
        <begin position="229"/>
        <end position="247"/>
    </location>
</feature>
<feature type="strand" evidence="49">
    <location>
        <begin position="250"/>
        <end position="255"/>
    </location>
</feature>
<feature type="helix" evidence="49">
    <location>
        <begin position="258"/>
        <end position="260"/>
    </location>
</feature>
<feature type="helix" evidence="49">
    <location>
        <begin position="273"/>
        <end position="284"/>
    </location>
</feature>
<feature type="strand" evidence="49">
    <location>
        <begin position="290"/>
        <end position="293"/>
    </location>
</feature>
<feature type="helix" evidence="49">
    <location>
        <begin position="300"/>
        <end position="314"/>
    </location>
</feature>
<feature type="helix" evidence="49">
    <location>
        <begin position="329"/>
        <end position="332"/>
    </location>
</feature>
<feature type="turn" evidence="49">
    <location>
        <begin position="333"/>
        <end position="335"/>
    </location>
</feature>
<feature type="strand" evidence="49">
    <location>
        <begin position="337"/>
        <end position="339"/>
    </location>
</feature>
<feature type="helix" evidence="49">
    <location>
        <begin position="352"/>
        <end position="367"/>
    </location>
</feature>
<sequence>MAKTVAYFYDPDVGNFHYGAGHPMKPHRLALTHSLVLHYGLYKKMIVFKPYQASQHDMCRFHSEDYIDFLQRVSPTNMQGFTKSLNAFNVGDDCPVFPGLFEFCSRYTGASLQGATQLNNKICDIAINWAGGLHHAKKFEASGFCYVNDIVIGILELLKYHPRVLYIDIDIHHGDGVQEAFYLTDRVMTVSFHKYGNYFFPGTGDMYEVGAESGRYYCLNVPLRDGIDDQSYKHLFQPVINQVVDFYQPTCIVLQCGADSLGCDRLGCFNLSIRGHGECVEYVKSFNIPLLVLGGGGYTVRNVARCWTYETSLLVEEAISEELPYSEYFEYFAPDFTLHPDVSTRIENQNSRQYLDQIRQTIFENLKMLNHAPSVQIHDVPADLLTYDRTDEADAEERGPEENYSRPEAPNEFYDGDHDNDKESDVEI</sequence>
<accession>O15379</accession>
<accession>D3DQE1</accession>
<accession>O43268</accession>
<accession>Q9UEI5</accession>
<accession>Q9UEV0</accession>